<gene>
    <name type="primary">ARHGEF2</name>
    <name type="synonym">KIAA0651</name>
    <name type="synonym">LFP40</name>
</gene>
<feature type="chain" id="PRO_0000080909" description="Rho guanine nucleotide exchange factor 2">
    <location>
        <begin position="1"/>
        <end position="986"/>
    </location>
</feature>
<feature type="domain" description="DH" evidence="5">
    <location>
        <begin position="235"/>
        <end position="432"/>
    </location>
</feature>
<feature type="domain" description="PH" evidence="6">
    <location>
        <begin position="472"/>
        <end position="571"/>
    </location>
</feature>
<feature type="zinc finger region" description="Phorbol-ester/DAG-type" evidence="7">
    <location>
        <begin position="39"/>
        <end position="86"/>
    </location>
</feature>
<feature type="region of interest" description="Interaction with DYNLT1" evidence="3">
    <location>
        <begin position="131"/>
        <end position="161"/>
    </location>
</feature>
<feature type="region of interest" description="Disordered" evidence="8">
    <location>
        <begin position="683"/>
        <end position="705"/>
    </location>
</feature>
<feature type="region of interest" description="Disordered" evidence="8">
    <location>
        <begin position="862"/>
        <end position="986"/>
    </location>
</feature>
<feature type="coiled-coil region" evidence="4">
    <location>
        <begin position="587"/>
        <end position="611"/>
    </location>
</feature>
<feature type="coiled-coil region" evidence="4">
    <location>
        <begin position="798"/>
        <end position="867"/>
    </location>
</feature>
<feature type="compositionally biased region" description="Basic and acidic residues" evidence="8">
    <location>
        <begin position="920"/>
        <end position="939"/>
    </location>
</feature>
<feature type="compositionally biased region" description="Acidic residues" evidence="8">
    <location>
        <begin position="941"/>
        <end position="950"/>
    </location>
</feature>
<feature type="modified residue" description="Phosphoserine" evidence="30">
    <location>
        <position position="109"/>
    </location>
</feature>
<feature type="modified residue" description="Phosphoserine" evidence="30">
    <location>
        <position position="122"/>
    </location>
</feature>
<feature type="modified residue" description="Phosphoserine" evidence="30">
    <location>
        <position position="129"/>
    </location>
</feature>
<feature type="modified residue" description="Phosphoserine" evidence="30">
    <location>
        <position position="133"/>
    </location>
</feature>
<feature type="modified residue" description="Phosphoserine" evidence="30">
    <location>
        <position position="137"/>
    </location>
</feature>
<feature type="modified residue" description="Phosphoserine; by PAK4" evidence="11">
    <location>
        <position position="143"/>
    </location>
</feature>
<feature type="modified residue" description="Phosphoserine" evidence="30">
    <location>
        <position position="151"/>
    </location>
</feature>
<feature type="modified residue" description="Phosphoserine" evidence="25 26 30">
    <location>
        <position position="163"/>
    </location>
</feature>
<feature type="modified residue" description="Phosphoserine" evidence="28 30">
    <location>
        <position position="172"/>
    </location>
</feature>
<feature type="modified residue" description="Phosphoserine" evidence="30">
    <location>
        <position position="174"/>
    </location>
</feature>
<feature type="modified residue" description="Phosphoserine" evidence="30">
    <location>
        <position position="177"/>
    </location>
</feature>
<feature type="modified residue" description="N6-acetyllysine" evidence="27">
    <location>
        <position position="353"/>
    </location>
</feature>
<feature type="modified residue" description="Phosphoserine" evidence="26 30">
    <location>
        <position position="645"/>
    </location>
</feature>
<feature type="modified residue" description="Phosphoserine" evidence="26">
    <location>
        <position position="648"/>
    </location>
</feature>
<feature type="modified residue" description="Phosphothreonine; by MAPK1 or MAPK3" evidence="13 28 31">
    <location>
        <position position="679"/>
    </location>
</feature>
<feature type="modified residue" description="Phosphoserine" evidence="28">
    <location>
        <position position="691"/>
    </location>
</feature>
<feature type="modified residue" description="Phosphoserine" evidence="23 26 28">
    <location>
        <position position="696"/>
    </location>
</feature>
<feature type="modified residue" description="Phosphoserine" evidence="30">
    <location>
        <position position="711"/>
    </location>
</feature>
<feature type="modified residue" description="Phosphoserine" evidence="2">
    <location>
        <position position="782"/>
    </location>
</feature>
<feature type="modified residue" description="Phosphoserine; by PAK1 and AURKA" evidence="10 12 26 28 30">
    <location>
        <position position="886"/>
    </location>
</feature>
<feature type="modified residue" description="Phosphotyrosine" evidence="26">
    <location>
        <position position="894"/>
    </location>
</feature>
<feature type="modified residue" description="Phosphoserine; by PAK4" evidence="11">
    <location>
        <position position="896"/>
    </location>
</feature>
<feature type="modified residue" description="Phosphoserine" evidence="24 30">
    <location>
        <position position="932"/>
    </location>
</feature>
<feature type="modified residue" description="Phosphoserine" evidence="26">
    <location>
        <position position="940"/>
    </location>
</feature>
<feature type="modified residue" description="Phosphoserine" evidence="26 28">
    <location>
        <position position="941"/>
    </location>
</feature>
<feature type="modified residue" description="Phosphothreonine" evidence="28">
    <location>
        <position position="945"/>
    </location>
</feature>
<feature type="modified residue" description="Phosphoserine" evidence="28">
    <location>
        <position position="947"/>
    </location>
</feature>
<feature type="modified residue" description="Phosphoserine" evidence="2">
    <location>
        <position position="952"/>
    </location>
</feature>
<feature type="modified residue" description="Phosphoserine" evidence="28">
    <location>
        <position position="953"/>
    </location>
</feature>
<feature type="modified residue" description="Phosphoserine" evidence="26 28 29 30 31">
    <location>
        <position position="956"/>
    </location>
</feature>
<feature type="modified residue" description="Phosphoserine" evidence="12 26 28 29 30">
    <location>
        <position position="960"/>
    </location>
</feature>
<feature type="splice variant" id="VSP_039457" description="In isoform 3." evidence="20 21">
    <location>
        <begin position="1"/>
        <end position="27"/>
    </location>
</feature>
<feature type="splice variant" id="VSP_039458" description="In isoform 2 and isoform 3." evidence="19 20 21">
    <location>
        <position position="194"/>
    </location>
</feature>
<feature type="mutagenesis site" description="Abolishes microtubule binding, increased activity in vitro." evidence="9">
    <original>C</original>
    <variation>R</variation>
    <location>
        <position position="53"/>
    </location>
</feature>
<feature type="mutagenesis site" description="Abolishes phosphorylation by PAK4, self aggregation in the cytoplasm. Increases activity; when associated with A-896." evidence="11">
    <original>S</original>
    <variation>A</variation>
    <location>
        <position position="143"/>
    </location>
</feature>
<feature type="mutagenesis site" description="Reduces phosphorylation level, normal microtubule localization and activity." evidence="9">
    <original>Y</original>
    <variation>A</variation>
    <location>
        <position position="394"/>
    </location>
</feature>
<feature type="mutagenesis site" description="Reduces phosphorylation level." evidence="13">
    <original>T</original>
    <variation>A</variation>
    <location>
        <position position="679"/>
    </location>
</feature>
<feature type="mutagenesis site" description="Normal activity.">
    <original>S</original>
    <variation>A</variation>
    <location>
        <position position="886"/>
    </location>
</feature>
<feature type="mutagenesis site" description="Increases activity. Abolishes nucleotide exchange activity; when associated with D-960.">
    <original>S</original>
    <variation>D</variation>
    <location>
        <position position="886"/>
    </location>
</feature>
<feature type="mutagenesis site" description="Abolishes phosphorylation by PAK4, self aggregation in the cytoplasm. Increases activity; when associated with A-143." evidence="11">
    <original>S</original>
    <variation>A</variation>
    <location>
        <position position="896"/>
    </location>
</feature>
<feature type="mutagenesis site" description="Normal activity.">
    <original>S</original>
    <variation>A</variation>
    <location>
        <position position="960"/>
    </location>
</feature>
<feature type="mutagenesis site" description="Increases activity. Abolishes nucleotide exchange activity; when associated with D-886.">
    <original>S</original>
    <variation>D</variation>
    <location>
        <position position="960"/>
    </location>
</feature>
<feature type="sequence conflict" description="In Ref. 3; BAA31626." evidence="22" ref="3">
    <original>MSRIESLTRARIDRSRELAS</original>
    <variation>IVGAAGHGRALSLCFDNGPLEQVPLALEETASIGMPRPQGGPLPADPRRTGHLSGTGHQGGYASRLDQDSCHPSAGPLDHSATGMLSKSVPVSGINCLLDRSDTDGNVSQSSAIDLRKRCSQLEGHSGTRVGSSLRQTFSFLSGMTGKA</variation>
    <location>
        <begin position="1"/>
        <end position="20"/>
    </location>
</feature>
<feature type="sequence conflict" description="In Ref. 10; CAA33634." evidence="22" ref="10">
    <original>M</original>
    <variation>L</variation>
    <location>
        <position position="631"/>
    </location>
</feature>
<feature type="sequence conflict" description="In Ref. 10; CAA33634." evidence="22" ref="10">
    <original>P</original>
    <variation>Q</variation>
    <location>
        <position position="868"/>
    </location>
</feature>
<feature type="helix" evidence="33">
    <location>
        <begin position="206"/>
        <end position="211"/>
    </location>
</feature>
<feature type="strand" evidence="33">
    <location>
        <begin position="214"/>
        <end position="216"/>
    </location>
</feature>
<feature type="helix" evidence="33">
    <location>
        <begin position="217"/>
        <end position="220"/>
    </location>
</feature>
<feature type="helix" evidence="33">
    <location>
        <begin position="223"/>
        <end position="226"/>
    </location>
</feature>
<feature type="helix" evidence="33">
    <location>
        <begin position="231"/>
        <end position="259"/>
    </location>
</feature>
<feature type="helix" evidence="33">
    <location>
        <begin position="262"/>
        <end position="268"/>
    </location>
</feature>
<feature type="helix" evidence="33">
    <location>
        <begin position="275"/>
        <end position="279"/>
    </location>
</feature>
<feature type="helix" evidence="33">
    <location>
        <begin position="283"/>
        <end position="304"/>
    </location>
</feature>
<feature type="helix" evidence="33">
    <location>
        <begin position="318"/>
        <end position="325"/>
    </location>
</feature>
<feature type="helix" evidence="33">
    <location>
        <begin position="328"/>
        <end position="343"/>
    </location>
</feature>
<feature type="helix" evidence="33">
    <location>
        <begin position="345"/>
        <end position="358"/>
    </location>
</feature>
<feature type="helix" evidence="33">
    <location>
        <begin position="360"/>
        <end position="369"/>
    </location>
</feature>
<feature type="helix" evidence="33">
    <location>
        <begin position="373"/>
        <end position="375"/>
    </location>
</feature>
<feature type="helix" evidence="33">
    <location>
        <begin position="380"/>
        <end position="390"/>
    </location>
</feature>
<feature type="helix" evidence="33">
    <location>
        <begin position="391"/>
        <end position="393"/>
    </location>
</feature>
<feature type="helix" evidence="33">
    <location>
        <begin position="394"/>
        <end position="403"/>
    </location>
</feature>
<feature type="helix" evidence="33">
    <location>
        <begin position="409"/>
        <end position="431"/>
    </location>
</feature>
<feature type="helix" evidence="33">
    <location>
        <begin position="442"/>
        <end position="446"/>
    </location>
</feature>
<feature type="strand" evidence="32">
    <location>
        <begin position="454"/>
        <end position="457"/>
    </location>
</feature>
<feature type="turn" evidence="32">
    <location>
        <begin position="458"/>
        <end position="460"/>
    </location>
</feature>
<feature type="strand" evidence="32">
    <location>
        <begin position="461"/>
        <end position="464"/>
    </location>
</feature>
<feature type="helix" evidence="32">
    <location>
        <begin position="465"/>
        <end position="469"/>
    </location>
</feature>
<feature type="strand" evidence="32">
    <location>
        <begin position="473"/>
        <end position="482"/>
    </location>
</feature>
<feature type="strand" evidence="32">
    <location>
        <begin position="488"/>
        <end position="504"/>
    </location>
</feature>
<feature type="strand" evidence="32">
    <location>
        <begin position="509"/>
        <end position="511"/>
    </location>
</feature>
<feature type="strand" evidence="32">
    <location>
        <begin position="519"/>
        <end position="522"/>
    </location>
</feature>
<feature type="strand" evidence="32">
    <location>
        <begin position="527"/>
        <end position="530"/>
    </location>
</feature>
<feature type="strand" evidence="32">
    <location>
        <begin position="537"/>
        <end position="542"/>
    </location>
</feature>
<feature type="turn" evidence="32">
    <location>
        <begin position="543"/>
        <end position="546"/>
    </location>
</feature>
<feature type="strand" evidence="32">
    <location>
        <begin position="547"/>
        <end position="552"/>
    </location>
</feature>
<feature type="helix" evidence="32">
    <location>
        <begin position="556"/>
        <end position="571"/>
    </location>
</feature>
<feature type="turn" evidence="32">
    <location>
        <begin position="576"/>
        <end position="578"/>
    </location>
</feature>
<sequence length="986" mass="111543">MSRIESLTRARIDRSRELASKTREKEKMKEAKDARYTNGHLFTTISVSGMTMCYACNKSITAKEALICPTCNVTIHNRCKDTLANCTKVKQKQQKAALLKNNTALQSVSLRSKTTIRERPSSAIYPSDSFRQSLLGSRRGRSSLSLAKSVSTTNIAGHFNDESPLGLRRILSQSTDSLNMRNRTLSVESLIDEAEVIYSELMSDFEMDEKDFAADSWSLAVDSSFLQQHKKEVMKQQDVIYELIQTELHHVRTLKIMTRLFRTGMLEELHLEPGVVQGLFPCVDELSDIHTRFLSQLLERRRQALCPGSTRNFVIHRLGDLLISQFSGPSAEQMCKTYSEFCSRHSKALKLYKELYARDKRFQQFIRKVTRPAVLKRHGVQECILLVTQRITKYPLLISRILQHSHGIEEERQDLTTALGLVKELLSNVDEGIYQLEKGARLQEIYNRMDPRAQTPVPGKGPFGREELLRRKLIHDGCLLWKTATGRFKDVLVLLMTDVLVFLQEKDQKYIFPTLDKPSVVSLQNLIVRDIANQEKGMFLISAAPPEMYEVHTASRDDRSTWIRVIQQSVRTCPSREDFPLIETEDEAYLRRIKMELQQKDRALVELLREKVGLFAEMTHFQAEEDGGSGMALPTLPRGLFRSESLESPRGERLLQDAIREVEGLKDLLVGPGVELLLTPREPALPLEPDSGGNTSPGVTANGEARTFNGSIELCRADSDSSQRDRNGNQLRSPQEEALQRLVNLYGLLHGLQAAVAQQDTLMEARFPEGPERREKLCRANSRDGEAGRAGAAPVAPEKQATELALLQRQHALLQEELRRCRRLGEERATEAGSLEARLRESEQARALLEREAEEARRQLAALGQTEPLPAEAPWARRPVDPRRRSLPAGDALYLSFNPPQPSRGTDRLDLPVTTRSVHRNFEDRERQELGSPEERLQDSSDPDTGSEEEGSSRLSPPHSPRDFTRMQDIPEETESRDGEAVASES</sequence>
<proteinExistence type="evidence at protein level"/>
<accession>Q92974</accession>
<accession>D3DVA6</accession>
<accession>O75142</accession>
<accession>Q15079</accession>
<accession>Q5VY92</accession>
<accession>Q8TDA3</accession>
<accession>Q8WUG4</accession>
<accession>Q9H023</accession>
<dbReference type="EMBL" id="U72206">
    <property type="protein sequence ID" value="AAC97383.1"/>
    <property type="status" value="ALT_SEQ"/>
    <property type="molecule type" value="mRNA"/>
</dbReference>
<dbReference type="EMBL" id="AF486838">
    <property type="protein sequence ID" value="AAL96658.1"/>
    <property type="molecule type" value="mRNA"/>
</dbReference>
<dbReference type="EMBL" id="AB014551">
    <property type="protein sequence ID" value="BAA31626.3"/>
    <property type="status" value="ALT_INIT"/>
    <property type="molecule type" value="mRNA"/>
</dbReference>
<dbReference type="EMBL" id="AL512715">
    <property type="protein sequence ID" value="CAC21656.1"/>
    <property type="molecule type" value="mRNA"/>
</dbReference>
<dbReference type="EMBL" id="AL355388">
    <property type="status" value="NOT_ANNOTATED_CDS"/>
    <property type="molecule type" value="Genomic_DNA"/>
</dbReference>
<dbReference type="EMBL" id="CH471121">
    <property type="protein sequence ID" value="EAW53013.1"/>
    <property type="molecule type" value="Genomic_DNA"/>
</dbReference>
<dbReference type="EMBL" id="CH471121">
    <property type="protein sequence ID" value="EAW53015.1"/>
    <property type="molecule type" value="Genomic_DNA"/>
</dbReference>
<dbReference type="EMBL" id="CH471121">
    <property type="protein sequence ID" value="EAW53014.1"/>
    <property type="molecule type" value="Genomic_DNA"/>
</dbReference>
<dbReference type="EMBL" id="BC020567">
    <property type="protein sequence ID" value="AAH20567.1"/>
    <property type="status" value="ALT_INIT"/>
    <property type="molecule type" value="mRNA"/>
</dbReference>
<dbReference type="EMBL" id="BT007407">
    <property type="protein sequence ID" value="AAP36075.1"/>
    <property type="molecule type" value="mRNA"/>
</dbReference>
<dbReference type="EMBL" id="X15610">
    <property type="protein sequence ID" value="CAA33634.1"/>
    <property type="status" value="ALT_FRAME"/>
    <property type="molecule type" value="mRNA"/>
</dbReference>
<dbReference type="CCDS" id="CCDS1125.1">
    <molecule id="Q92974-3"/>
</dbReference>
<dbReference type="CCDS" id="CCDS53375.1">
    <molecule id="Q92974-2"/>
</dbReference>
<dbReference type="CCDS" id="CCDS53376.1">
    <molecule id="Q92974-1"/>
</dbReference>
<dbReference type="PIR" id="S28660">
    <property type="entry name" value="S28660"/>
</dbReference>
<dbReference type="RefSeq" id="NP_001155855.1">
    <molecule id="Q92974-1"/>
    <property type="nucleotide sequence ID" value="NM_001162383.2"/>
</dbReference>
<dbReference type="RefSeq" id="NP_001155856.1">
    <molecule id="Q92974-2"/>
    <property type="nucleotide sequence ID" value="NM_001162384.2"/>
</dbReference>
<dbReference type="RefSeq" id="NP_004714.2">
    <molecule id="Q92974-3"/>
    <property type="nucleotide sequence ID" value="NM_004723.3"/>
</dbReference>
<dbReference type="PDB" id="5EFX">
    <property type="method" value="X-ray"/>
    <property type="resolution" value="2.45 A"/>
    <property type="chains" value="A=439-582"/>
</dbReference>
<dbReference type="PDB" id="7G80">
    <property type="method" value="X-ray"/>
    <property type="resolution" value="1.67 A"/>
    <property type="chains" value="B=206-448"/>
</dbReference>
<dbReference type="PDB" id="7G81">
    <property type="method" value="X-ray"/>
    <property type="resolution" value="1.51 A"/>
    <property type="chains" value="B=206-448"/>
</dbReference>
<dbReference type="PDB" id="7G82">
    <property type="method" value="X-ray"/>
    <property type="resolution" value="1.41 A"/>
    <property type="chains" value="B=206-448"/>
</dbReference>
<dbReference type="PDB" id="7G83">
    <property type="method" value="X-ray"/>
    <property type="resolution" value="1.31 A"/>
    <property type="chains" value="B=206-448"/>
</dbReference>
<dbReference type="PDB" id="7G84">
    <property type="method" value="X-ray"/>
    <property type="resolution" value="1.81 A"/>
    <property type="chains" value="B=206-448"/>
</dbReference>
<dbReference type="PDB" id="7G85">
    <property type="method" value="X-ray"/>
    <property type="resolution" value="1.74 A"/>
    <property type="chains" value="B=206-448"/>
</dbReference>
<dbReference type="PDB" id="7G86">
    <property type="method" value="X-ray"/>
    <property type="resolution" value="1.70 A"/>
    <property type="chains" value="B=206-448"/>
</dbReference>
<dbReference type="PDB" id="7G87">
    <property type="method" value="X-ray"/>
    <property type="resolution" value="2.05 A"/>
    <property type="chains" value="B=206-448"/>
</dbReference>
<dbReference type="PDB" id="7G88">
    <property type="method" value="X-ray"/>
    <property type="resolution" value="1.87 A"/>
    <property type="chains" value="B=206-448"/>
</dbReference>
<dbReference type="PDB" id="7G89">
    <property type="method" value="X-ray"/>
    <property type="resolution" value="1.90 A"/>
    <property type="chains" value="B=206-448"/>
</dbReference>
<dbReference type="PDB" id="7G8A">
    <property type="method" value="X-ray"/>
    <property type="resolution" value="1.50 A"/>
    <property type="chains" value="B=206-448"/>
</dbReference>
<dbReference type="PDB" id="7G8B">
    <property type="method" value="X-ray"/>
    <property type="resolution" value="1.42 A"/>
    <property type="chains" value="B=206-448"/>
</dbReference>
<dbReference type="PDB" id="7G8C">
    <property type="method" value="X-ray"/>
    <property type="resolution" value="2.18 A"/>
    <property type="chains" value="B=206-448"/>
</dbReference>
<dbReference type="PDB" id="7G8D">
    <property type="method" value="X-ray"/>
    <property type="resolution" value="1.94 A"/>
    <property type="chains" value="B=206-448"/>
</dbReference>
<dbReference type="PDB" id="7G8E">
    <property type="method" value="X-ray"/>
    <property type="resolution" value="1.79 A"/>
    <property type="chains" value="B=206-448"/>
</dbReference>
<dbReference type="PDB" id="7G8F">
    <property type="method" value="X-ray"/>
    <property type="resolution" value="1.42 A"/>
    <property type="chains" value="B=206-448"/>
</dbReference>
<dbReference type="PDB" id="7G8G">
    <property type="method" value="X-ray"/>
    <property type="resolution" value="1.92 A"/>
    <property type="chains" value="B=206-448"/>
</dbReference>
<dbReference type="PDB" id="7G8H">
    <property type="method" value="X-ray"/>
    <property type="resolution" value="1.67 A"/>
    <property type="chains" value="B=206-448"/>
</dbReference>
<dbReference type="PDB" id="7G8I">
    <property type="method" value="X-ray"/>
    <property type="resolution" value="2.47 A"/>
    <property type="chains" value="B=206-448"/>
</dbReference>
<dbReference type="PDB" id="7G8J">
    <property type="method" value="X-ray"/>
    <property type="resolution" value="1.99 A"/>
    <property type="chains" value="B=206-448"/>
</dbReference>
<dbReference type="PDB" id="7G8K">
    <property type="method" value="X-ray"/>
    <property type="resolution" value="1.49 A"/>
    <property type="chains" value="B=206-448"/>
</dbReference>
<dbReference type="PDB" id="7G8L">
    <property type="method" value="X-ray"/>
    <property type="resolution" value="1.60 A"/>
    <property type="chains" value="B=206-448"/>
</dbReference>
<dbReference type="PDB" id="7G8M">
    <property type="method" value="X-ray"/>
    <property type="resolution" value="2.03 A"/>
    <property type="chains" value="B=206-448"/>
</dbReference>
<dbReference type="PDB" id="7G8N">
    <property type="method" value="X-ray"/>
    <property type="resolution" value="2.32 A"/>
    <property type="chains" value="B=206-448"/>
</dbReference>
<dbReference type="PDB" id="7G8O">
    <property type="method" value="X-ray"/>
    <property type="resolution" value="1.58 A"/>
    <property type="chains" value="B=206-448"/>
</dbReference>
<dbReference type="PDB" id="7G8P">
    <property type="method" value="X-ray"/>
    <property type="resolution" value="2.21 A"/>
    <property type="chains" value="B=206-448"/>
</dbReference>
<dbReference type="PDB" id="7G8Q">
    <property type="method" value="X-ray"/>
    <property type="resolution" value="1.56 A"/>
    <property type="chains" value="B=206-448"/>
</dbReference>
<dbReference type="PDB" id="7G8R">
    <property type="method" value="X-ray"/>
    <property type="resolution" value="1.44 A"/>
    <property type="chains" value="B=206-448"/>
</dbReference>
<dbReference type="PDB" id="7G8S">
    <property type="method" value="X-ray"/>
    <property type="resolution" value="1.60 A"/>
    <property type="chains" value="B=206-448"/>
</dbReference>
<dbReference type="PDB" id="7G8T">
    <property type="method" value="X-ray"/>
    <property type="resolution" value="1.39 A"/>
    <property type="chains" value="B=206-448"/>
</dbReference>
<dbReference type="PDB" id="7G8U">
    <property type="method" value="X-ray"/>
    <property type="resolution" value="2.44 A"/>
    <property type="chains" value="B=206-448"/>
</dbReference>
<dbReference type="PDB" id="7G8V">
    <property type="method" value="X-ray"/>
    <property type="resolution" value="1.45 A"/>
    <property type="chains" value="B=206-448"/>
</dbReference>
<dbReference type="PDB" id="7G8W">
    <property type="method" value="X-ray"/>
    <property type="resolution" value="1.94 A"/>
    <property type="chains" value="B=206-448"/>
</dbReference>
<dbReference type="PDB" id="7G8X">
    <property type="method" value="X-ray"/>
    <property type="resolution" value="1.71 A"/>
    <property type="chains" value="B=206-448"/>
</dbReference>
<dbReference type="PDB" id="7G8Y">
    <property type="method" value="X-ray"/>
    <property type="resolution" value="1.75 A"/>
    <property type="chains" value="B=206-448"/>
</dbReference>
<dbReference type="PDB" id="7G8Z">
    <property type="method" value="X-ray"/>
    <property type="resolution" value="1.51 A"/>
    <property type="chains" value="B=206-448"/>
</dbReference>
<dbReference type="PDB" id="7G90">
    <property type="method" value="X-ray"/>
    <property type="resolution" value="1.91 A"/>
    <property type="chains" value="B=206-448"/>
</dbReference>
<dbReference type="PDB" id="7G91">
    <property type="method" value="X-ray"/>
    <property type="resolution" value="2.29 A"/>
    <property type="chains" value="B=206-448"/>
</dbReference>
<dbReference type="PDB" id="7G92">
    <property type="method" value="X-ray"/>
    <property type="resolution" value="1.87 A"/>
    <property type="chains" value="B=206-448"/>
</dbReference>
<dbReference type="PDB" id="7G93">
    <property type="method" value="X-ray"/>
    <property type="resolution" value="1.69 A"/>
    <property type="chains" value="B=206-448"/>
</dbReference>
<dbReference type="PDB" id="7G94">
    <property type="method" value="X-ray"/>
    <property type="resolution" value="1.47 A"/>
    <property type="chains" value="B=206-448"/>
</dbReference>
<dbReference type="PDB" id="7G95">
    <property type="method" value="X-ray"/>
    <property type="resolution" value="1.55 A"/>
    <property type="chains" value="B=206-448"/>
</dbReference>
<dbReference type="PDB" id="7G96">
    <property type="method" value="X-ray"/>
    <property type="resolution" value="2.30 A"/>
    <property type="chains" value="B=206-448"/>
</dbReference>
<dbReference type="PDB" id="7G97">
    <property type="method" value="X-ray"/>
    <property type="resolution" value="2.30 A"/>
    <property type="chains" value="B=206-448"/>
</dbReference>
<dbReference type="PDB" id="7G98">
    <property type="method" value="X-ray"/>
    <property type="resolution" value="2.88 A"/>
    <property type="chains" value="B=206-448"/>
</dbReference>
<dbReference type="PDB" id="7G99">
    <property type="method" value="X-ray"/>
    <property type="resolution" value="1.78 A"/>
    <property type="chains" value="B=206-448"/>
</dbReference>
<dbReference type="PDB" id="7G9A">
    <property type="method" value="X-ray"/>
    <property type="resolution" value="2.58 A"/>
    <property type="chains" value="B=206-448"/>
</dbReference>
<dbReference type="PDB" id="7G9B">
    <property type="method" value="X-ray"/>
    <property type="resolution" value="2.55 A"/>
    <property type="chains" value="B=206-448"/>
</dbReference>
<dbReference type="PDB" id="7G9C">
    <property type="method" value="X-ray"/>
    <property type="resolution" value="2.69 A"/>
    <property type="chains" value="B=206-448"/>
</dbReference>
<dbReference type="PDB" id="7G9D">
    <property type="method" value="X-ray"/>
    <property type="resolution" value="2.66 A"/>
    <property type="chains" value="B=206-448"/>
</dbReference>
<dbReference type="PDB" id="7G9E">
    <property type="method" value="X-ray"/>
    <property type="resolution" value="2.15 A"/>
    <property type="chains" value="B=206-448"/>
</dbReference>
<dbReference type="PDB" id="7G9F">
    <property type="method" value="X-ray"/>
    <property type="resolution" value="1.94 A"/>
    <property type="chains" value="B=206-448"/>
</dbReference>
<dbReference type="PDB" id="7G9G">
    <property type="method" value="X-ray"/>
    <property type="resolution" value="2.08 A"/>
    <property type="chains" value="B=206-448"/>
</dbReference>
<dbReference type="PDB" id="7G9H">
    <property type="method" value="X-ray"/>
    <property type="resolution" value="2.75 A"/>
    <property type="chains" value="B=206-448"/>
</dbReference>
<dbReference type="PDB" id="7G9I">
    <property type="method" value="X-ray"/>
    <property type="resolution" value="2.20 A"/>
    <property type="chains" value="B=206-448"/>
</dbReference>
<dbReference type="PDB" id="7G9J">
    <property type="method" value="X-ray"/>
    <property type="resolution" value="1.97 A"/>
    <property type="chains" value="B=206-448"/>
</dbReference>
<dbReference type="PDB" id="8BNT">
    <property type="method" value="X-ray"/>
    <property type="resolution" value="1.40 A"/>
    <property type="chains" value="B=206-448"/>
</dbReference>
<dbReference type="PDBsum" id="5EFX"/>
<dbReference type="PDBsum" id="7G80"/>
<dbReference type="PDBsum" id="7G81"/>
<dbReference type="PDBsum" id="7G82"/>
<dbReference type="PDBsum" id="7G83"/>
<dbReference type="PDBsum" id="7G84"/>
<dbReference type="PDBsum" id="7G85"/>
<dbReference type="PDBsum" id="7G86"/>
<dbReference type="PDBsum" id="7G87"/>
<dbReference type="PDBsum" id="7G88"/>
<dbReference type="PDBsum" id="7G89"/>
<dbReference type="PDBsum" id="7G8A"/>
<dbReference type="PDBsum" id="7G8B"/>
<dbReference type="PDBsum" id="7G8C"/>
<dbReference type="PDBsum" id="7G8D"/>
<dbReference type="PDBsum" id="7G8E"/>
<dbReference type="PDBsum" id="7G8F"/>
<dbReference type="PDBsum" id="7G8G"/>
<dbReference type="PDBsum" id="7G8H"/>
<dbReference type="PDBsum" id="7G8I"/>
<dbReference type="PDBsum" id="7G8J"/>
<dbReference type="PDBsum" id="7G8K"/>
<dbReference type="PDBsum" id="7G8L"/>
<dbReference type="PDBsum" id="7G8M"/>
<dbReference type="PDBsum" id="7G8N"/>
<dbReference type="PDBsum" id="7G8O"/>
<dbReference type="PDBsum" id="7G8P"/>
<dbReference type="PDBsum" id="7G8Q"/>
<dbReference type="PDBsum" id="7G8R"/>
<dbReference type="PDBsum" id="7G8S"/>
<dbReference type="PDBsum" id="7G8T"/>
<dbReference type="PDBsum" id="7G8U"/>
<dbReference type="PDBsum" id="7G8V"/>
<dbReference type="PDBsum" id="7G8W"/>
<dbReference type="PDBsum" id="7G8X"/>
<dbReference type="PDBsum" id="7G8Y"/>
<dbReference type="PDBsum" id="7G8Z"/>
<dbReference type="PDBsum" id="7G90"/>
<dbReference type="PDBsum" id="7G91"/>
<dbReference type="PDBsum" id="7G92"/>
<dbReference type="PDBsum" id="7G93"/>
<dbReference type="PDBsum" id="7G94"/>
<dbReference type="PDBsum" id="7G95"/>
<dbReference type="PDBsum" id="7G96"/>
<dbReference type="PDBsum" id="7G97"/>
<dbReference type="PDBsum" id="7G98"/>
<dbReference type="PDBsum" id="7G99"/>
<dbReference type="PDBsum" id="7G9A"/>
<dbReference type="PDBsum" id="7G9B"/>
<dbReference type="PDBsum" id="7G9C"/>
<dbReference type="PDBsum" id="7G9D"/>
<dbReference type="PDBsum" id="7G9E"/>
<dbReference type="PDBsum" id="7G9F"/>
<dbReference type="PDBsum" id="7G9G"/>
<dbReference type="PDBsum" id="7G9H"/>
<dbReference type="PDBsum" id="7G9I"/>
<dbReference type="PDBsum" id="7G9J"/>
<dbReference type="PDBsum" id="8BNT"/>
<dbReference type="SMR" id="Q92974"/>
<dbReference type="BioGRID" id="114618">
    <property type="interactions" value="256"/>
</dbReference>
<dbReference type="CORUM" id="Q92974"/>
<dbReference type="ELM" id="Q92974"/>
<dbReference type="FunCoup" id="Q92974">
    <property type="interactions" value="1552"/>
</dbReference>
<dbReference type="IntAct" id="Q92974">
    <property type="interactions" value="102"/>
</dbReference>
<dbReference type="MINT" id="Q92974"/>
<dbReference type="STRING" id="9606.ENSP00000354837"/>
<dbReference type="GlyCosmos" id="Q92974">
    <property type="glycosylation" value="1 site, 1 glycan"/>
</dbReference>
<dbReference type="GlyGen" id="Q92974">
    <property type="glycosylation" value="1 site, 1 O-linked glycan (1 site)"/>
</dbReference>
<dbReference type="iPTMnet" id="Q92974"/>
<dbReference type="MetOSite" id="Q92974"/>
<dbReference type="PhosphoSitePlus" id="Q92974"/>
<dbReference type="SwissPalm" id="Q92974"/>
<dbReference type="BioMuta" id="ARHGEF2"/>
<dbReference type="DMDM" id="205830906"/>
<dbReference type="jPOST" id="Q92974"/>
<dbReference type="MassIVE" id="Q92974"/>
<dbReference type="PaxDb" id="9606-ENSP00000354837"/>
<dbReference type="PeptideAtlas" id="Q92974"/>
<dbReference type="ProteomicsDB" id="75638">
    <molecule id="Q92974-1"/>
</dbReference>
<dbReference type="ProteomicsDB" id="75639">
    <molecule id="Q92974-2"/>
</dbReference>
<dbReference type="ProteomicsDB" id="75640">
    <molecule id="Q92974-3"/>
</dbReference>
<dbReference type="Pumba" id="Q92974"/>
<dbReference type="TopDownProteomics" id="Q92974-2">
    <molecule id="Q92974-2"/>
</dbReference>
<dbReference type="Antibodypedia" id="20425">
    <property type="antibodies" value="455 antibodies from 35 providers"/>
</dbReference>
<dbReference type="DNASU" id="9181"/>
<dbReference type="Ensembl" id="ENST00000313667.8">
    <molecule id="Q92974-2"/>
    <property type="protein sequence ID" value="ENSP00000314787.4"/>
    <property type="gene ID" value="ENSG00000116584.22"/>
</dbReference>
<dbReference type="Ensembl" id="ENST00000313695.11">
    <molecule id="Q92974-3"/>
    <property type="protein sequence ID" value="ENSP00000315325.7"/>
    <property type="gene ID" value="ENSG00000116584.22"/>
</dbReference>
<dbReference type="Ensembl" id="ENST00000361247.9">
    <molecule id="Q92974-1"/>
    <property type="protein sequence ID" value="ENSP00000354837.4"/>
    <property type="gene ID" value="ENSG00000116584.22"/>
</dbReference>
<dbReference type="GeneID" id="9181"/>
<dbReference type="KEGG" id="hsa:9181"/>
<dbReference type="MANE-Select" id="ENST00000361247.9">
    <property type="protein sequence ID" value="ENSP00000354837.4"/>
    <property type="RefSeq nucleotide sequence ID" value="NM_001162383.2"/>
    <property type="RefSeq protein sequence ID" value="NP_001155855.1"/>
</dbReference>
<dbReference type="UCSC" id="uc001fmr.3">
    <molecule id="Q92974-1"/>
    <property type="organism name" value="human"/>
</dbReference>
<dbReference type="AGR" id="HGNC:682"/>
<dbReference type="CTD" id="9181"/>
<dbReference type="DisGeNET" id="9181"/>
<dbReference type="GeneCards" id="ARHGEF2"/>
<dbReference type="HGNC" id="HGNC:682">
    <property type="gene designation" value="ARHGEF2"/>
</dbReference>
<dbReference type="HPA" id="ENSG00000116584">
    <property type="expression patterns" value="Low tissue specificity"/>
</dbReference>
<dbReference type="MalaCards" id="ARHGEF2"/>
<dbReference type="MIM" id="607560">
    <property type="type" value="gene"/>
</dbReference>
<dbReference type="MIM" id="617523">
    <property type="type" value="phenotype"/>
</dbReference>
<dbReference type="neXtProt" id="NX_Q92974"/>
<dbReference type="OpenTargets" id="ENSG00000116584"/>
<dbReference type="PharmGKB" id="PA24972"/>
<dbReference type="VEuPathDB" id="HostDB:ENSG00000116584"/>
<dbReference type="eggNOG" id="KOG3520">
    <property type="taxonomic scope" value="Eukaryota"/>
</dbReference>
<dbReference type="GeneTree" id="ENSGT00940000158341"/>
<dbReference type="HOGENOM" id="CLU_002466_1_1_1"/>
<dbReference type="InParanoid" id="Q92974"/>
<dbReference type="OrthoDB" id="28045at2759"/>
<dbReference type="PAN-GO" id="Q92974">
    <property type="GO annotations" value="7 GO annotations based on evolutionary models"/>
</dbReference>
<dbReference type="PhylomeDB" id="Q92974"/>
<dbReference type="TreeFam" id="TF325887"/>
<dbReference type="PathwayCommons" id="Q92974"/>
<dbReference type="Reactome" id="R-HSA-193648">
    <property type="pathway name" value="NRAGE signals death through JNK"/>
</dbReference>
<dbReference type="Reactome" id="R-HSA-416482">
    <property type="pathway name" value="G alpha (12/13) signalling events"/>
</dbReference>
<dbReference type="Reactome" id="R-HSA-8980692">
    <property type="pathway name" value="RHOA GTPase cycle"/>
</dbReference>
<dbReference type="Reactome" id="R-HSA-9013026">
    <property type="pathway name" value="RHOB GTPase cycle"/>
</dbReference>
<dbReference type="SignaLink" id="Q92974"/>
<dbReference type="SIGNOR" id="Q92974"/>
<dbReference type="BioGRID-ORCS" id="9181">
    <property type="hits" value="25 hits in 1162 CRISPR screens"/>
</dbReference>
<dbReference type="CD-CODE" id="8C2F96ED">
    <property type="entry name" value="Centrosome"/>
</dbReference>
<dbReference type="CD-CODE" id="FB4E32DD">
    <property type="entry name" value="Presynaptic clusters and postsynaptic densities"/>
</dbReference>
<dbReference type="ChiTaRS" id="ARHGEF2">
    <property type="organism name" value="human"/>
</dbReference>
<dbReference type="GeneWiki" id="ARHGEF2"/>
<dbReference type="GenomeRNAi" id="9181"/>
<dbReference type="Pharos" id="Q92974">
    <property type="development level" value="Tbio"/>
</dbReference>
<dbReference type="PRO" id="PR:Q92974"/>
<dbReference type="Proteomes" id="UP000005640">
    <property type="component" value="Chromosome 1"/>
</dbReference>
<dbReference type="RNAct" id="Q92974">
    <property type="molecule type" value="protein"/>
</dbReference>
<dbReference type="Bgee" id="ENSG00000116584">
    <property type="expression patterns" value="Expressed in inferior vagus X ganglion and 210 other cell types or tissues"/>
</dbReference>
<dbReference type="ExpressionAtlas" id="Q92974">
    <property type="expression patterns" value="baseline and differential"/>
</dbReference>
<dbReference type="GO" id="GO:0005923">
    <property type="term" value="C:bicellular tight junction"/>
    <property type="evidence" value="ECO:0007669"/>
    <property type="project" value="UniProtKB-SubCell"/>
</dbReference>
<dbReference type="GO" id="GO:0005737">
    <property type="term" value="C:cytoplasm"/>
    <property type="evidence" value="ECO:0000314"/>
    <property type="project" value="UniProtKB"/>
</dbReference>
<dbReference type="GO" id="GO:0031410">
    <property type="term" value="C:cytoplasmic vesicle"/>
    <property type="evidence" value="ECO:0007669"/>
    <property type="project" value="UniProtKB-KW"/>
</dbReference>
<dbReference type="GO" id="GO:0005856">
    <property type="term" value="C:cytoskeleton"/>
    <property type="evidence" value="ECO:0000314"/>
    <property type="project" value="UniProtKB"/>
</dbReference>
<dbReference type="GO" id="GO:0005829">
    <property type="term" value="C:cytosol"/>
    <property type="evidence" value="ECO:0000304"/>
    <property type="project" value="Reactome"/>
</dbReference>
<dbReference type="GO" id="GO:0005925">
    <property type="term" value="C:focal adhesion"/>
    <property type="evidence" value="ECO:0007005"/>
    <property type="project" value="UniProtKB"/>
</dbReference>
<dbReference type="GO" id="GO:0005794">
    <property type="term" value="C:Golgi apparatus"/>
    <property type="evidence" value="ECO:0007669"/>
    <property type="project" value="UniProtKB-SubCell"/>
</dbReference>
<dbReference type="GO" id="GO:0005874">
    <property type="term" value="C:microtubule"/>
    <property type="evidence" value="ECO:0000314"/>
    <property type="project" value="UniProtKB"/>
</dbReference>
<dbReference type="GO" id="GO:0032991">
    <property type="term" value="C:protein-containing complex"/>
    <property type="evidence" value="ECO:0000314"/>
    <property type="project" value="UniProtKB"/>
</dbReference>
<dbReference type="GO" id="GO:0032587">
    <property type="term" value="C:ruffle membrane"/>
    <property type="evidence" value="ECO:0000314"/>
    <property type="project" value="UniProtKB"/>
</dbReference>
<dbReference type="GO" id="GO:0005819">
    <property type="term" value="C:spindle"/>
    <property type="evidence" value="ECO:0007669"/>
    <property type="project" value="UniProtKB-SubCell"/>
</dbReference>
<dbReference type="GO" id="GO:0031982">
    <property type="term" value="C:vesicle"/>
    <property type="evidence" value="ECO:0000314"/>
    <property type="project" value="UniProtKB"/>
</dbReference>
<dbReference type="GO" id="GO:0005085">
    <property type="term" value="F:guanyl-nucleotide exchange factor activity"/>
    <property type="evidence" value="ECO:0000314"/>
    <property type="project" value="UniProtKB"/>
</dbReference>
<dbReference type="GO" id="GO:0008017">
    <property type="term" value="F:microtubule binding"/>
    <property type="evidence" value="ECO:0000314"/>
    <property type="project" value="UniProtKB"/>
</dbReference>
<dbReference type="GO" id="GO:0031267">
    <property type="term" value="F:small GTPase binding"/>
    <property type="evidence" value="ECO:0000314"/>
    <property type="project" value="UniProtKB"/>
</dbReference>
<dbReference type="GO" id="GO:0008270">
    <property type="term" value="F:zinc ion binding"/>
    <property type="evidence" value="ECO:0000303"/>
    <property type="project" value="UniProtKB"/>
</dbReference>
<dbReference type="GO" id="GO:0007015">
    <property type="term" value="P:actin filament organization"/>
    <property type="evidence" value="ECO:0000315"/>
    <property type="project" value="UniProtKB"/>
</dbReference>
<dbReference type="GO" id="GO:0055059">
    <property type="term" value="P:asymmetric neuroblast division"/>
    <property type="evidence" value="ECO:0000314"/>
    <property type="project" value="UniProtKB"/>
</dbReference>
<dbReference type="GO" id="GO:0000902">
    <property type="term" value="P:cell morphogenesis"/>
    <property type="evidence" value="ECO:0000315"/>
    <property type="project" value="UniProtKB"/>
</dbReference>
<dbReference type="GO" id="GO:0071474">
    <property type="term" value="P:cellular hyperosmotic response"/>
    <property type="evidence" value="ECO:0000250"/>
    <property type="project" value="BHF-UCL"/>
</dbReference>
<dbReference type="GO" id="GO:0071225">
    <property type="term" value="P:cellular response to muramyl dipeptide"/>
    <property type="evidence" value="ECO:0000314"/>
    <property type="project" value="UniProtKB"/>
</dbReference>
<dbReference type="GO" id="GO:0071356">
    <property type="term" value="P:cellular response to tumor necrosis factor"/>
    <property type="evidence" value="ECO:0000250"/>
    <property type="project" value="BHF-UCL"/>
</dbReference>
<dbReference type="GO" id="GO:0045087">
    <property type="term" value="P:innate immune response"/>
    <property type="evidence" value="ECO:0007669"/>
    <property type="project" value="UniProtKB-KW"/>
</dbReference>
<dbReference type="GO" id="GO:0006886">
    <property type="term" value="P:intracellular protein transport"/>
    <property type="evidence" value="ECO:0000303"/>
    <property type="project" value="UniProtKB"/>
</dbReference>
<dbReference type="GO" id="GO:1902042">
    <property type="term" value="P:negative regulation of extrinsic apoptotic signaling pathway via death domain receptors"/>
    <property type="evidence" value="ECO:0000250"/>
    <property type="project" value="BHF-UCL"/>
</dbReference>
<dbReference type="GO" id="GO:1902219">
    <property type="term" value="P:negative regulation of intrinsic apoptotic signaling pathway in response to osmotic stress"/>
    <property type="evidence" value="ECO:0000250"/>
    <property type="project" value="BHF-UCL"/>
</dbReference>
<dbReference type="GO" id="GO:0007026">
    <property type="term" value="P:negative regulation of microtubule depolymerization"/>
    <property type="evidence" value="ECO:0000315"/>
    <property type="project" value="UniProtKB"/>
</dbReference>
<dbReference type="GO" id="GO:0060546">
    <property type="term" value="P:negative regulation of necroptotic process"/>
    <property type="evidence" value="ECO:0000250"/>
    <property type="project" value="BHF-UCL"/>
</dbReference>
<dbReference type="GO" id="GO:0032755">
    <property type="term" value="P:positive regulation of interleukin-6 production"/>
    <property type="evidence" value="ECO:0000314"/>
    <property type="project" value="UniProtKB"/>
</dbReference>
<dbReference type="GO" id="GO:0045666">
    <property type="term" value="P:positive regulation of neuron differentiation"/>
    <property type="evidence" value="ECO:0000314"/>
    <property type="project" value="UniProtKB"/>
</dbReference>
<dbReference type="GO" id="GO:2001224">
    <property type="term" value="P:positive regulation of neuron migration"/>
    <property type="evidence" value="ECO:0000250"/>
    <property type="project" value="UniProtKB"/>
</dbReference>
<dbReference type="GO" id="GO:0051092">
    <property type="term" value="P:positive regulation of NF-kappaB transcription factor activity"/>
    <property type="evidence" value="ECO:0000314"/>
    <property type="project" value="UniProtKB"/>
</dbReference>
<dbReference type="GO" id="GO:0050731">
    <property type="term" value="P:positive regulation of peptidyl-tyrosine phosphorylation"/>
    <property type="evidence" value="ECO:0000314"/>
    <property type="project" value="UniProtKB"/>
</dbReference>
<dbReference type="GO" id="GO:0045944">
    <property type="term" value="P:positive regulation of transcription by RNA polymerase II"/>
    <property type="evidence" value="ECO:0000314"/>
    <property type="project" value="UniProtKB"/>
</dbReference>
<dbReference type="GO" id="GO:0032760">
    <property type="term" value="P:positive regulation of tumor necrosis factor production"/>
    <property type="evidence" value="ECO:0000314"/>
    <property type="project" value="UniProtKB"/>
</dbReference>
<dbReference type="GO" id="GO:0042127">
    <property type="term" value="P:regulation of cell population proliferation"/>
    <property type="evidence" value="ECO:0000304"/>
    <property type="project" value="UniProtKB"/>
</dbReference>
<dbReference type="GO" id="GO:0035023">
    <property type="term" value="P:regulation of Rho protein signal transduction"/>
    <property type="evidence" value="ECO:0000318"/>
    <property type="project" value="GO_Central"/>
</dbReference>
<dbReference type="GO" id="GO:0051056">
    <property type="term" value="P:regulation of small GTPase mediated signal transduction"/>
    <property type="evidence" value="ECO:0000304"/>
    <property type="project" value="Reactome"/>
</dbReference>
<dbReference type="CDD" id="cd20877">
    <property type="entry name" value="C1_ARHGEF2"/>
    <property type="match status" value="1"/>
</dbReference>
<dbReference type="CDD" id="cd13393">
    <property type="entry name" value="PH_ARHGEF2"/>
    <property type="match status" value="1"/>
</dbReference>
<dbReference type="CDD" id="cd00160">
    <property type="entry name" value="RhoGEF"/>
    <property type="match status" value="1"/>
</dbReference>
<dbReference type="FunFam" id="1.20.900.10:FF:000004">
    <property type="entry name" value="Rho guanine nucleotide exchange factor 2"/>
    <property type="match status" value="1"/>
</dbReference>
<dbReference type="FunFam" id="2.30.29.30:FF:000021">
    <property type="entry name" value="Rho guanine nucleotide exchange factor 2"/>
    <property type="match status" value="1"/>
</dbReference>
<dbReference type="FunFam" id="3.30.60.20:FF:000032">
    <property type="entry name" value="rho guanine nucleotide exchange factor 2 isoform X2"/>
    <property type="match status" value="1"/>
</dbReference>
<dbReference type="Gene3D" id="3.30.60.20">
    <property type="match status" value="1"/>
</dbReference>
<dbReference type="Gene3D" id="1.20.900.10">
    <property type="entry name" value="Dbl homology (DH) domain"/>
    <property type="match status" value="1"/>
</dbReference>
<dbReference type="Gene3D" id="2.30.29.30">
    <property type="entry name" value="Pleckstrin-homology domain (PH domain)/Phosphotyrosine-binding domain (PTB)"/>
    <property type="match status" value="1"/>
</dbReference>
<dbReference type="InterPro" id="IPR037806">
    <property type="entry name" value="ARHGEF2_PH"/>
</dbReference>
<dbReference type="InterPro" id="IPR046349">
    <property type="entry name" value="C1-like_sf"/>
</dbReference>
<dbReference type="InterPro" id="IPR035899">
    <property type="entry name" value="DBL_dom_sf"/>
</dbReference>
<dbReference type="InterPro" id="IPR000219">
    <property type="entry name" value="DH_dom"/>
</dbReference>
<dbReference type="InterPro" id="IPR002219">
    <property type="entry name" value="PE/DAG-bd"/>
</dbReference>
<dbReference type="InterPro" id="IPR011993">
    <property type="entry name" value="PH-like_dom_sf"/>
</dbReference>
<dbReference type="InterPro" id="IPR041020">
    <property type="entry name" value="PH_16"/>
</dbReference>
<dbReference type="InterPro" id="IPR001849">
    <property type="entry name" value="PH_domain"/>
</dbReference>
<dbReference type="InterPro" id="IPR051632">
    <property type="entry name" value="Rho_GEF"/>
</dbReference>
<dbReference type="PANTHER" id="PTHR13944">
    <property type="entry name" value="AGAP007712-PA"/>
    <property type="match status" value="1"/>
</dbReference>
<dbReference type="PANTHER" id="PTHR13944:SF20">
    <property type="entry name" value="RHO GUANINE NUCLEOTIDE EXCHANGE FACTOR 2"/>
    <property type="match status" value="1"/>
</dbReference>
<dbReference type="Pfam" id="PF17838">
    <property type="entry name" value="PH_16"/>
    <property type="match status" value="1"/>
</dbReference>
<dbReference type="Pfam" id="PF00621">
    <property type="entry name" value="RhoGEF"/>
    <property type="match status" value="1"/>
</dbReference>
<dbReference type="SMART" id="SM00109">
    <property type="entry name" value="C1"/>
    <property type="match status" value="1"/>
</dbReference>
<dbReference type="SMART" id="SM00233">
    <property type="entry name" value="PH"/>
    <property type="match status" value="1"/>
</dbReference>
<dbReference type="SMART" id="SM00325">
    <property type="entry name" value="RhoGEF"/>
    <property type="match status" value="1"/>
</dbReference>
<dbReference type="SUPFAM" id="SSF57889">
    <property type="entry name" value="Cysteine-rich domain"/>
    <property type="match status" value="1"/>
</dbReference>
<dbReference type="SUPFAM" id="SSF48065">
    <property type="entry name" value="DBL homology domain (DH-domain)"/>
    <property type="match status" value="1"/>
</dbReference>
<dbReference type="SUPFAM" id="SSF50729">
    <property type="entry name" value="PH domain-like"/>
    <property type="match status" value="1"/>
</dbReference>
<dbReference type="PROSITE" id="PS50010">
    <property type="entry name" value="DH_2"/>
    <property type="match status" value="1"/>
</dbReference>
<dbReference type="PROSITE" id="PS50003">
    <property type="entry name" value="PH_DOMAIN"/>
    <property type="match status" value="1"/>
</dbReference>
<dbReference type="PROSITE" id="PS00479">
    <property type="entry name" value="ZF_DAG_PE_1"/>
    <property type="match status" value="1"/>
</dbReference>
<dbReference type="PROSITE" id="PS50081">
    <property type="entry name" value="ZF_DAG_PE_2"/>
    <property type="match status" value="1"/>
</dbReference>
<reference key="1">
    <citation type="journal article" date="1998" name="J. Biol. Chem.">
        <title>Cloning and characterization of GEF-H1, a microtubule-associated guanine nucleotide exchange factor for Rac and Rho GTPases.</title>
        <authorList>
            <person name="Ren Y."/>
            <person name="Li R."/>
            <person name="Zheng Y."/>
            <person name="Busch H."/>
        </authorList>
    </citation>
    <scope>NUCLEOTIDE SEQUENCE [MRNA] (ISOFORM 1)</scope>
    <scope>FUNCTION</scope>
    <scope>INTERACTION WITH RHOA AND RAC1</scope>
    <scope>SUBCELLULAR LOCATION</scope>
    <scope>DOMAIN COILED-COIL</scope>
    <source>
        <tissue>Cervix carcinoma</tissue>
    </source>
</reference>
<reference key="2">
    <citation type="journal article" date="2002" name="Nat. Cell Biol.">
        <title>Nucleotide exchange factor GEF-H1 mediates cross-talk between microtubules and the actin cytoskeleton.</title>
        <authorList>
            <person name="Krendel M."/>
            <person name="Zenke F.T."/>
            <person name="Bokoch G.M."/>
        </authorList>
    </citation>
    <scope>NUCLEOTIDE SEQUENCE [MRNA] (ISOFORM 2)</scope>
    <scope>SUBCELLULAR LOCATION</scope>
    <scope>DOMAIN ZINC-FINGER</scope>
    <scope>MUTAGENESIS OF CYS-53 AND TYR-394</scope>
</reference>
<reference key="3">
    <citation type="journal article" date="1998" name="DNA Res.">
        <title>Prediction of the coding sequences of unidentified human genes. X. The complete sequences of 100 new cDNA clones from brain which can code for large proteins in vitro.</title>
        <authorList>
            <person name="Ishikawa K."/>
            <person name="Nagase T."/>
            <person name="Suyama M."/>
            <person name="Miyajima N."/>
            <person name="Tanaka A."/>
            <person name="Kotani H."/>
            <person name="Nomura N."/>
            <person name="Ohara O."/>
        </authorList>
    </citation>
    <scope>NUCLEOTIDE SEQUENCE [LARGE SCALE MRNA] (ISOFORM 3)</scope>
    <source>
        <tissue>Brain</tissue>
    </source>
</reference>
<reference key="4">
    <citation type="submission" date="2005-01" db="EMBL/GenBank/DDBJ databases">
        <authorList>
            <person name="Ishikawa K."/>
            <person name="Nagase T."/>
            <person name="Suyama M."/>
            <person name="Miyajima N."/>
            <person name="Tanaka A."/>
            <person name="Kotani H."/>
            <person name="Nomura N."/>
            <person name="Ohara O."/>
        </authorList>
    </citation>
    <scope>SEQUENCE REVISION</scope>
</reference>
<reference key="5">
    <citation type="journal article" date="2007" name="BMC Genomics">
        <title>The full-ORF clone resource of the German cDNA consortium.</title>
        <authorList>
            <person name="Bechtel S."/>
            <person name="Rosenfelder H."/>
            <person name="Duda A."/>
            <person name="Schmidt C.P."/>
            <person name="Ernst U."/>
            <person name="Wellenreuther R."/>
            <person name="Mehrle A."/>
            <person name="Schuster C."/>
            <person name="Bahr A."/>
            <person name="Bloecker H."/>
            <person name="Heubner D."/>
            <person name="Hoerlein A."/>
            <person name="Michel G."/>
            <person name="Wedler H."/>
            <person name="Koehrer K."/>
            <person name="Ottenwaelder B."/>
            <person name="Poustka A."/>
            <person name="Wiemann S."/>
            <person name="Schupp I."/>
        </authorList>
    </citation>
    <scope>NUCLEOTIDE SEQUENCE [LARGE SCALE MRNA] (ISOFORM 3)</scope>
    <source>
        <tissue>Brain</tissue>
    </source>
</reference>
<reference key="6">
    <citation type="journal article" date="2006" name="Nature">
        <title>The DNA sequence and biological annotation of human chromosome 1.</title>
        <authorList>
            <person name="Gregory S.G."/>
            <person name="Barlow K.F."/>
            <person name="McLay K.E."/>
            <person name="Kaul R."/>
            <person name="Swarbreck D."/>
            <person name="Dunham A."/>
            <person name="Scott C.E."/>
            <person name="Howe K.L."/>
            <person name="Woodfine K."/>
            <person name="Spencer C.C.A."/>
            <person name="Jones M.C."/>
            <person name="Gillson C."/>
            <person name="Searle S."/>
            <person name="Zhou Y."/>
            <person name="Kokocinski F."/>
            <person name="McDonald L."/>
            <person name="Evans R."/>
            <person name="Phillips K."/>
            <person name="Atkinson A."/>
            <person name="Cooper R."/>
            <person name="Jones C."/>
            <person name="Hall R.E."/>
            <person name="Andrews T.D."/>
            <person name="Lloyd C."/>
            <person name="Ainscough R."/>
            <person name="Almeida J.P."/>
            <person name="Ambrose K.D."/>
            <person name="Anderson F."/>
            <person name="Andrew R.W."/>
            <person name="Ashwell R.I.S."/>
            <person name="Aubin K."/>
            <person name="Babbage A.K."/>
            <person name="Bagguley C.L."/>
            <person name="Bailey J."/>
            <person name="Beasley H."/>
            <person name="Bethel G."/>
            <person name="Bird C.P."/>
            <person name="Bray-Allen S."/>
            <person name="Brown J.Y."/>
            <person name="Brown A.J."/>
            <person name="Buckley D."/>
            <person name="Burton J."/>
            <person name="Bye J."/>
            <person name="Carder C."/>
            <person name="Chapman J.C."/>
            <person name="Clark S.Y."/>
            <person name="Clarke G."/>
            <person name="Clee C."/>
            <person name="Cobley V."/>
            <person name="Collier R.E."/>
            <person name="Corby N."/>
            <person name="Coville G.J."/>
            <person name="Davies J."/>
            <person name="Deadman R."/>
            <person name="Dunn M."/>
            <person name="Earthrowl M."/>
            <person name="Ellington A.G."/>
            <person name="Errington H."/>
            <person name="Frankish A."/>
            <person name="Frankland J."/>
            <person name="French L."/>
            <person name="Garner P."/>
            <person name="Garnett J."/>
            <person name="Gay L."/>
            <person name="Ghori M.R.J."/>
            <person name="Gibson R."/>
            <person name="Gilby L.M."/>
            <person name="Gillett W."/>
            <person name="Glithero R.J."/>
            <person name="Grafham D.V."/>
            <person name="Griffiths C."/>
            <person name="Griffiths-Jones S."/>
            <person name="Grocock R."/>
            <person name="Hammond S."/>
            <person name="Harrison E.S.I."/>
            <person name="Hart E."/>
            <person name="Haugen E."/>
            <person name="Heath P.D."/>
            <person name="Holmes S."/>
            <person name="Holt K."/>
            <person name="Howden P.J."/>
            <person name="Hunt A.R."/>
            <person name="Hunt S.E."/>
            <person name="Hunter G."/>
            <person name="Isherwood J."/>
            <person name="James R."/>
            <person name="Johnson C."/>
            <person name="Johnson D."/>
            <person name="Joy A."/>
            <person name="Kay M."/>
            <person name="Kershaw J.K."/>
            <person name="Kibukawa M."/>
            <person name="Kimberley A.M."/>
            <person name="King A."/>
            <person name="Knights A.J."/>
            <person name="Lad H."/>
            <person name="Laird G."/>
            <person name="Lawlor S."/>
            <person name="Leongamornlert D.A."/>
            <person name="Lloyd D.M."/>
            <person name="Loveland J."/>
            <person name="Lovell J."/>
            <person name="Lush M.J."/>
            <person name="Lyne R."/>
            <person name="Martin S."/>
            <person name="Mashreghi-Mohammadi M."/>
            <person name="Matthews L."/>
            <person name="Matthews N.S.W."/>
            <person name="McLaren S."/>
            <person name="Milne S."/>
            <person name="Mistry S."/>
            <person name="Moore M.J.F."/>
            <person name="Nickerson T."/>
            <person name="O'Dell C.N."/>
            <person name="Oliver K."/>
            <person name="Palmeiri A."/>
            <person name="Palmer S.A."/>
            <person name="Parker A."/>
            <person name="Patel D."/>
            <person name="Pearce A.V."/>
            <person name="Peck A.I."/>
            <person name="Pelan S."/>
            <person name="Phelps K."/>
            <person name="Phillimore B.J."/>
            <person name="Plumb R."/>
            <person name="Rajan J."/>
            <person name="Raymond C."/>
            <person name="Rouse G."/>
            <person name="Saenphimmachak C."/>
            <person name="Sehra H.K."/>
            <person name="Sheridan E."/>
            <person name="Shownkeen R."/>
            <person name="Sims S."/>
            <person name="Skuce C.D."/>
            <person name="Smith M."/>
            <person name="Steward C."/>
            <person name="Subramanian S."/>
            <person name="Sycamore N."/>
            <person name="Tracey A."/>
            <person name="Tromans A."/>
            <person name="Van Helmond Z."/>
            <person name="Wall M."/>
            <person name="Wallis J.M."/>
            <person name="White S."/>
            <person name="Whitehead S.L."/>
            <person name="Wilkinson J.E."/>
            <person name="Willey D.L."/>
            <person name="Williams H."/>
            <person name="Wilming L."/>
            <person name="Wray P.W."/>
            <person name="Wu Z."/>
            <person name="Coulson A."/>
            <person name="Vaudin M."/>
            <person name="Sulston J.E."/>
            <person name="Durbin R.M."/>
            <person name="Hubbard T."/>
            <person name="Wooster R."/>
            <person name="Dunham I."/>
            <person name="Carter N.P."/>
            <person name="McVean G."/>
            <person name="Ross M.T."/>
            <person name="Harrow J."/>
            <person name="Olson M.V."/>
            <person name="Beck S."/>
            <person name="Rogers J."/>
            <person name="Bentley D.R."/>
        </authorList>
    </citation>
    <scope>NUCLEOTIDE SEQUENCE [LARGE SCALE GENOMIC DNA]</scope>
</reference>
<reference key="7">
    <citation type="submission" date="2005-09" db="EMBL/GenBank/DDBJ databases">
        <authorList>
            <person name="Mural R.J."/>
            <person name="Istrail S."/>
            <person name="Sutton G.G."/>
            <person name="Florea L."/>
            <person name="Halpern A.L."/>
            <person name="Mobarry C.M."/>
            <person name="Lippert R."/>
            <person name="Walenz B."/>
            <person name="Shatkay H."/>
            <person name="Dew I."/>
            <person name="Miller J.R."/>
            <person name="Flanigan M.J."/>
            <person name="Edwards N.J."/>
            <person name="Bolanos R."/>
            <person name="Fasulo D."/>
            <person name="Halldorsson B.V."/>
            <person name="Hannenhalli S."/>
            <person name="Turner R."/>
            <person name="Yooseph S."/>
            <person name="Lu F."/>
            <person name="Nusskern D.R."/>
            <person name="Shue B.C."/>
            <person name="Zheng X.H."/>
            <person name="Zhong F."/>
            <person name="Delcher A.L."/>
            <person name="Huson D.H."/>
            <person name="Kravitz S.A."/>
            <person name="Mouchard L."/>
            <person name="Reinert K."/>
            <person name="Remington K.A."/>
            <person name="Clark A.G."/>
            <person name="Waterman M.S."/>
            <person name="Eichler E.E."/>
            <person name="Adams M.D."/>
            <person name="Hunkapiller M.W."/>
            <person name="Myers E.W."/>
            <person name="Venter J.C."/>
        </authorList>
    </citation>
    <scope>NUCLEOTIDE SEQUENCE [LARGE SCALE GENOMIC DNA]</scope>
</reference>
<reference key="8">
    <citation type="journal article" date="2004" name="Genome Res.">
        <title>The status, quality, and expansion of the NIH full-length cDNA project: the Mammalian Gene Collection (MGC).</title>
        <authorList>
            <consortium name="The MGC Project Team"/>
        </authorList>
    </citation>
    <scope>NUCLEOTIDE SEQUENCE [LARGE SCALE MRNA] (ISOFORM 1)</scope>
    <source>
        <tissue>Brain</tissue>
    </source>
</reference>
<reference key="9">
    <citation type="submission" date="2003-05" db="EMBL/GenBank/DDBJ databases">
        <title>Cloning of human full-length CDSs in BD Creator(TM) system donor vector.</title>
        <authorList>
            <person name="Kalnine N."/>
            <person name="Chen X."/>
            <person name="Rolfs A."/>
            <person name="Halleck A."/>
            <person name="Hines L."/>
            <person name="Eisenstein S."/>
            <person name="Koundinya M."/>
            <person name="Raphael J."/>
            <person name="Moreira D."/>
            <person name="Kelley T."/>
            <person name="LaBaer J."/>
            <person name="Lin Y."/>
            <person name="Phelan M."/>
            <person name="Farmer A."/>
        </authorList>
    </citation>
    <scope>NUCLEOTIDE SEQUENCE [LARGE SCALE MRNA] OF 28-986 (ISOFORMS 1/3)</scope>
</reference>
<reference key="10">
    <citation type="journal article" date="1989" name="Cancer Res.">
        <title>Isolation and characterization of complementary DNA to proliferating cell nucleolar antigen P40.</title>
        <authorList>
            <person name="Reddy A.B."/>
            <person name="Chatterjee A."/>
            <person name="Rothblum L.I."/>
            <person name="Black A."/>
            <person name="Busch H."/>
        </authorList>
    </citation>
    <scope>NUCLEOTIDE SEQUENCE [MRNA] OF 630-986 (ISOFORMS 1/2/3)</scope>
</reference>
<reference key="11">
    <citation type="journal article" date="2004" name="J. Biol. Chem.">
        <title>p21-activated kinase 1 phosphorylates and regulates 14-3-3 binding to GEF-H1, a microtubule-localized Rho exchange factor.</title>
        <authorList>
            <person name="Zenke F.T."/>
            <person name="Krendel M."/>
            <person name="DerMardirossian C."/>
            <person name="King C.C."/>
            <person name="Bohl B.P."/>
            <person name="Bokoch G.M."/>
        </authorList>
    </citation>
    <scope>PHOSPHORYLATION AT SER-886</scope>
    <scope>INTERACTION WITH YWHAZ</scope>
</reference>
<reference key="12">
    <citation type="journal article" date="2005" name="J. Cell Sci.">
        <title>PAK4 mediates morphological changes through the regulation of GEF-H1.</title>
        <authorList>
            <person name="Callow M.G."/>
            <person name="Zozulya S."/>
            <person name="Gishizky M.L."/>
            <person name="Jallal B."/>
            <person name="Smeal T."/>
        </authorList>
    </citation>
    <scope>PHOSPHORYLATION AT SER-143 AND SER-896</scope>
    <scope>MUTAGENESIS OF SER-143 AND SER-896</scope>
    <scope>SUBCELLULAR LOCATION</scope>
    <scope>INTERACTION WITH PAK4</scope>
</reference>
<reference key="13">
    <citation type="journal article" date="2006" name="Cell">
        <title>Global, in vivo, and site-specific phosphorylation dynamics in signaling networks.</title>
        <authorList>
            <person name="Olsen J.V."/>
            <person name="Blagoev B."/>
            <person name="Gnad F."/>
            <person name="Macek B."/>
            <person name="Kumar C."/>
            <person name="Mortensen P."/>
            <person name="Mann M."/>
        </authorList>
    </citation>
    <scope>PHOSPHORYLATION [LARGE SCALE ANALYSIS] AT SER-932</scope>
    <scope>IDENTIFICATION BY MASS SPECTROMETRY [LARGE SCALE ANALYSIS]</scope>
    <source>
        <tissue>Cervix carcinoma</tissue>
    </source>
</reference>
<reference key="14">
    <citation type="journal article" date="2006" name="Nat. Biotechnol.">
        <title>A probability-based approach for high-throughput protein phosphorylation analysis and site localization.</title>
        <authorList>
            <person name="Beausoleil S.A."/>
            <person name="Villen J."/>
            <person name="Gerber S.A."/>
            <person name="Rush J."/>
            <person name="Gygi S.P."/>
        </authorList>
    </citation>
    <scope>PHOSPHORYLATION [LARGE SCALE ANALYSIS] AT SER-696</scope>
    <scope>IDENTIFICATION BY MASS SPECTROMETRY [LARGE SCALE ANALYSIS]</scope>
    <source>
        <tissue>Cervix carcinoma</tissue>
    </source>
</reference>
<reference key="15">
    <citation type="journal article" date="2007" name="Dev. Cell">
        <title>GEF-H1 modulates localized RhoA activation during cytokinesis under the control of mitotic kinases.</title>
        <authorList>
            <person name="Birkenfeld J."/>
            <person name="Nalbant P."/>
            <person name="Bohl B.P."/>
            <person name="Pertz O."/>
            <person name="Hahn K.M."/>
            <person name="Bokoch G.M."/>
        </authorList>
    </citation>
    <scope>PHOSPHORYLATION AT SER-886 AND SER-960</scope>
    <scope>INTERACTION WITH AURKA</scope>
    <scope>SUBCELLULAR LOCATION</scope>
</reference>
<reference key="16">
    <citation type="journal article" date="2008" name="Biochem. Biophys. Res. Commun.">
        <title>ERK1/2 phosphorylate GEF-H1 to enhance its guanine nucleotide exchange activity toward RhoA.</title>
        <authorList>
            <person name="Fujishiro S.H."/>
            <person name="Tanimura S."/>
            <person name="Mure S."/>
            <person name="Kashimoto Y."/>
            <person name="Watanabe K."/>
            <person name="Kohno M."/>
        </authorList>
    </citation>
    <scope>PHOSPHORYLATION AT THR-679</scope>
    <scope>INTERACTION WITH MAPK1</scope>
    <scope>MUTAGENESIS OF THR-679</scope>
</reference>
<reference key="17">
    <citation type="journal article" date="2008" name="J. Proteome Res.">
        <title>Combining protein-based IMAC, peptide-based IMAC, and MudPIT for efficient phosphoproteomic analysis.</title>
        <authorList>
            <person name="Cantin G.T."/>
            <person name="Yi W."/>
            <person name="Lu B."/>
            <person name="Park S.K."/>
            <person name="Xu T."/>
            <person name="Lee J.-D."/>
            <person name="Yates J.R. III"/>
        </authorList>
    </citation>
    <scope>PHOSPHORYLATION [LARGE SCALE ANALYSIS] AT SER-163</scope>
    <scope>IDENTIFICATION BY MASS SPECTROMETRY [LARGE SCALE ANALYSIS]</scope>
    <source>
        <tissue>Cervix carcinoma</tissue>
    </source>
</reference>
<reference key="18">
    <citation type="journal article" date="2008" name="J. Proteome Res.">
        <title>Phosphoproteome of resting human platelets.</title>
        <authorList>
            <person name="Zahedi R.P."/>
            <person name="Lewandrowski U."/>
            <person name="Wiesner J."/>
            <person name="Wortelkamp S."/>
            <person name="Moebius J."/>
            <person name="Schuetz C."/>
            <person name="Walter U."/>
            <person name="Gambaryan S."/>
            <person name="Sickmann A."/>
        </authorList>
    </citation>
    <scope>IDENTIFICATION BY MASS SPECTROMETRY [LARGE SCALE ANALYSIS]</scope>
    <source>
        <tissue>Platelet</tissue>
    </source>
</reference>
<reference key="19">
    <citation type="journal article" date="2008" name="PLoS Pathog.">
        <title>GEF-H1 mediated control of NOD1 dependent NF-kappaB activation by Shigella effectors.</title>
        <authorList>
            <person name="Fukazawa A."/>
            <person name="Alonso C."/>
            <person name="Kurachi K."/>
            <person name="Gupta S."/>
            <person name="Lesser C.F."/>
            <person name="McCormick B.A."/>
            <person name="Reinecker H.C."/>
        </authorList>
    </citation>
    <scope>FUNCTION</scope>
    <scope>SUBCELLULAR LOCATION</scope>
    <scope>INTERACTION WITH NOD1</scope>
</reference>
<reference key="20">
    <citation type="journal article" date="2008" name="Proc. Natl. Acad. Sci. U.S.A.">
        <title>A quantitative atlas of mitotic phosphorylation.</title>
        <authorList>
            <person name="Dephoure N."/>
            <person name="Zhou C."/>
            <person name="Villen J."/>
            <person name="Beausoleil S.A."/>
            <person name="Bakalarski C.E."/>
            <person name="Elledge S.J."/>
            <person name="Gygi S.P."/>
        </authorList>
    </citation>
    <scope>PHOSPHORYLATION [LARGE SCALE ANALYSIS] AT SER-163; SER-645; SER-648; SER-696; SER-886; TYR-894; SER-940; SER-941; SER-956 AND SER-960</scope>
    <scope>IDENTIFICATION BY MASS SPECTROMETRY [LARGE SCALE ANALYSIS]</scope>
    <source>
        <tissue>Cervix carcinoma</tissue>
    </source>
</reference>
<reference key="21">
    <citation type="journal article" date="2008" name="Trends Cell Biol.">
        <title>Cellular functions of GEF-H1, a microtubule-regulated Rho-GEF: is altered GEF-H1 activity a crucial determinant of disease pathogenesis?</title>
        <authorList>
            <person name="Birkenfeld J."/>
            <person name="Nalbant P."/>
            <person name="Yoon S.-H."/>
            <person name="Bokoch G.M."/>
        </authorList>
    </citation>
    <scope>REVIEW ON FUNCTION</scope>
</reference>
<reference key="22">
    <citation type="journal article" date="2009" name="Anal. Chem.">
        <title>Lys-N and trypsin cover complementary parts of the phosphoproteome in a refined SCX-based approach.</title>
        <authorList>
            <person name="Gauci S."/>
            <person name="Helbig A.O."/>
            <person name="Slijper M."/>
            <person name="Krijgsveld J."/>
            <person name="Heck A.J."/>
            <person name="Mohammed S."/>
        </authorList>
    </citation>
    <scope>IDENTIFICATION BY MASS SPECTROMETRY [LARGE SCALE ANALYSIS]</scope>
</reference>
<reference key="23">
    <citation type="journal article" date="2009" name="Sci. Signal.">
        <title>Quantitative phosphoproteomic analysis of T cell receptor signaling reveals system-wide modulation of protein-protein interactions.</title>
        <authorList>
            <person name="Mayya V."/>
            <person name="Lundgren D.H."/>
            <person name="Hwang S.-I."/>
            <person name="Rezaul K."/>
            <person name="Wu L."/>
            <person name="Eng J.K."/>
            <person name="Rodionov V."/>
            <person name="Han D.K."/>
        </authorList>
    </citation>
    <scope>PHOSPHORYLATION [LARGE SCALE ANALYSIS] AT SER-172; THR-679; SER-691; SER-696; SER-886; SER-941; THR-945; SER-947; SER-953; SER-956 AND SER-960</scope>
    <scope>IDENTIFICATION BY MASS SPECTROMETRY [LARGE SCALE ANALYSIS]</scope>
    <source>
        <tissue>Leukemic T-cell</tissue>
    </source>
</reference>
<reference key="24">
    <citation type="journal article" date="2009" name="Science">
        <title>Lysine acetylation targets protein complexes and co-regulates major cellular functions.</title>
        <authorList>
            <person name="Choudhary C."/>
            <person name="Kumar C."/>
            <person name="Gnad F."/>
            <person name="Nielsen M.L."/>
            <person name="Rehman M."/>
            <person name="Walther T.C."/>
            <person name="Olsen J.V."/>
            <person name="Mann M."/>
        </authorList>
    </citation>
    <scope>ACETYLATION [LARGE SCALE ANALYSIS] AT LYS-353</scope>
    <scope>IDENTIFICATION BY MASS SPECTROMETRY [LARGE SCALE ANALYSIS]</scope>
</reference>
<reference key="25">
    <citation type="journal article" date="2010" name="Sci. Signal.">
        <title>Quantitative phosphoproteomics reveals widespread full phosphorylation site occupancy during mitosis.</title>
        <authorList>
            <person name="Olsen J.V."/>
            <person name="Vermeulen M."/>
            <person name="Santamaria A."/>
            <person name="Kumar C."/>
            <person name="Miller M.L."/>
            <person name="Jensen L.J."/>
            <person name="Gnad F."/>
            <person name="Cox J."/>
            <person name="Jensen T.S."/>
            <person name="Nigg E.A."/>
            <person name="Brunak S."/>
            <person name="Mann M."/>
        </authorList>
    </citation>
    <scope>IDENTIFICATION BY MASS SPECTROMETRY [LARGE SCALE ANALYSIS]</scope>
    <source>
        <tissue>Cervix carcinoma</tissue>
    </source>
</reference>
<reference key="26">
    <citation type="journal article" date="2011" name="BMC Syst. Biol.">
        <title>Initial characterization of the human central proteome.</title>
        <authorList>
            <person name="Burkard T.R."/>
            <person name="Planyavsky M."/>
            <person name="Kaupe I."/>
            <person name="Breitwieser F.P."/>
            <person name="Buerckstuemmer T."/>
            <person name="Bennett K.L."/>
            <person name="Superti-Furga G."/>
            <person name="Colinge J."/>
        </authorList>
    </citation>
    <scope>IDENTIFICATION BY MASS SPECTROMETRY [LARGE SCALE ANALYSIS]</scope>
</reference>
<reference key="27">
    <citation type="journal article" date="2011" name="Sci. Signal.">
        <title>System-wide temporal characterization of the proteome and phosphoproteome of human embryonic stem cell differentiation.</title>
        <authorList>
            <person name="Rigbolt K.T."/>
            <person name="Prokhorova T.A."/>
            <person name="Akimov V."/>
            <person name="Henningsen J."/>
            <person name="Johansen P.T."/>
            <person name="Kratchmarova I."/>
            <person name="Kassem M."/>
            <person name="Mann M."/>
            <person name="Olsen J.V."/>
            <person name="Blagoev B."/>
        </authorList>
    </citation>
    <scope>PHOSPHORYLATION [LARGE SCALE ANALYSIS] AT SER-956 AND SER-960</scope>
    <scope>IDENTIFICATION BY MASS SPECTROMETRY [LARGE SCALE ANALYSIS]</scope>
</reference>
<reference key="28">
    <citation type="journal article" date="2012" name="Inflamm. Bowel Dis.">
        <title>Control of NOD2 and Rip2-dependent innate immune activation by GEF-H1.</title>
        <authorList>
            <person name="Zhao Y."/>
            <person name="Alonso C."/>
            <person name="Ballester I."/>
            <person name="Song J.H."/>
            <person name="Chang S.Y."/>
            <person name="Guleng B."/>
            <person name="Arihiro S."/>
            <person name="Murray P.J."/>
            <person name="Xavier R."/>
            <person name="Kobayashi K.S."/>
            <person name="Reinecker H.C."/>
        </authorList>
    </citation>
    <scope>FUNCTION</scope>
    <scope>IDENTIFICATION IN A COMPLEX WITH NOD2 AND RIPK2</scope>
    <scope>INTERACTION WITH RIPK1; RIPK2 AND RIPK3</scope>
    <scope>SUBCELLULAR LOCATION</scope>
    <scope>INDUCTION</scope>
</reference>
<reference key="29">
    <citation type="journal article" date="2012" name="Proc. Natl. Acad. Sci. U.S.A.">
        <title>N-terminal acetylome analyses and functional insights of the N-terminal acetyltransferase NatB.</title>
        <authorList>
            <person name="Van Damme P."/>
            <person name="Lasa M."/>
            <person name="Polevoda B."/>
            <person name="Gazquez C."/>
            <person name="Elosegui-Artola A."/>
            <person name="Kim D.S."/>
            <person name="De Juan-Pardo E."/>
            <person name="Demeyer K."/>
            <person name="Hole K."/>
            <person name="Larrea E."/>
            <person name="Timmerman E."/>
            <person name="Prieto J."/>
            <person name="Arnesen T."/>
            <person name="Sherman F."/>
            <person name="Gevaert K."/>
            <person name="Aldabe R."/>
        </authorList>
    </citation>
    <scope>IDENTIFICATION BY MASS SPECTROMETRY [LARGE SCALE ANALYSIS]</scope>
</reference>
<reference key="30">
    <citation type="journal article" date="2013" name="J. Proteome Res.">
        <title>Toward a comprehensive characterization of a human cancer cell phosphoproteome.</title>
        <authorList>
            <person name="Zhou H."/>
            <person name="Di Palma S."/>
            <person name="Preisinger C."/>
            <person name="Peng M."/>
            <person name="Polat A.N."/>
            <person name="Heck A.J."/>
            <person name="Mohammed S."/>
        </authorList>
    </citation>
    <scope>PHOSPHORYLATION [LARGE SCALE ANALYSIS] AT SER-109; SER-122; SER-129; SER-133; SER-137; SER-151; SER-163; SER-172; SER-174; SER-177; SER-645; SER-711; SER-886; SER-932; SER-956 AND SER-960</scope>
    <scope>IDENTIFICATION BY MASS SPECTROMETRY [LARGE SCALE ANALYSIS]</scope>
    <source>
        <tissue>Cervix carcinoma</tissue>
        <tissue>Erythroleukemia</tissue>
    </source>
</reference>
<reference key="31">
    <citation type="journal article" date="2014" name="J. Proteomics">
        <title>An enzyme assisted RP-RPLC approach for in-depth analysis of human liver phosphoproteome.</title>
        <authorList>
            <person name="Bian Y."/>
            <person name="Song C."/>
            <person name="Cheng K."/>
            <person name="Dong M."/>
            <person name="Wang F."/>
            <person name="Huang J."/>
            <person name="Sun D."/>
            <person name="Wang L."/>
            <person name="Ye M."/>
            <person name="Zou H."/>
        </authorList>
    </citation>
    <scope>PHOSPHORYLATION [LARGE SCALE ANALYSIS] AT THR-679 AND SER-956</scope>
    <scope>IDENTIFICATION BY MASS SPECTROMETRY [LARGE SCALE ANALYSIS]</scope>
    <source>
        <tissue>Liver</tissue>
    </source>
</reference>
<reference key="32">
    <citation type="journal article" date="2015" name="Proteomics">
        <title>N-terminome analysis of the human mitochondrial proteome.</title>
        <authorList>
            <person name="Vaca Jacome A.S."/>
            <person name="Rabilloud T."/>
            <person name="Schaeffer-Reiss C."/>
            <person name="Rompais M."/>
            <person name="Ayoub D."/>
            <person name="Lane L."/>
            <person name="Bairoch A."/>
            <person name="Van Dorsselaer A."/>
            <person name="Carapito C."/>
        </authorList>
    </citation>
    <scope>IDENTIFICATION BY MASS SPECTROMETRY [LARGE SCALE ANALYSIS]</scope>
</reference>
<reference key="33">
    <citation type="journal article" date="2017" name="PLoS Genet.">
        <title>Homozygous ARHGEF2 mutation causes intellectual disability and midbrain-hindbrain malformation.</title>
        <authorList>
            <person name="Ravindran E."/>
            <person name="Hu H."/>
            <person name="Yuzwa S.A."/>
            <person name="Hernandez-Miranda L.R."/>
            <person name="Kraemer N."/>
            <person name="Ninnemann O."/>
            <person name="Musante L."/>
            <person name="Boltshauser E."/>
            <person name="Schindler D."/>
            <person name="Huebner A."/>
            <person name="Reinecker H.C."/>
            <person name="Ropers H.H."/>
            <person name="Birchmeier C."/>
            <person name="Miller F.D."/>
            <person name="Wienker T.F."/>
            <person name="Huebner C."/>
            <person name="Kaindl A.M."/>
        </authorList>
    </citation>
    <scope>FUNCTION</scope>
    <scope>INVOLVEMENT IN NEDMHM</scope>
</reference>
<reference key="34">
    <citation type="journal article" date="2016" name="Biochem. Biophys. Res. Commun.">
        <title>Crystal structure of hGEF-H1 PH domain provides insight into incapability in phosphoinositide binding.</title>
        <authorList>
            <person name="Jiang Y."/>
            <person name="Jiang H."/>
            <person name="Zhou S."/>
            <person name="Meng B."/>
            <person name="Liu Z.J."/>
            <person name="Ouyang S."/>
        </authorList>
    </citation>
    <scope>X-RAY CRYSTALLOGRAPHY (2.45 ANGSTROMS) OF 439-582</scope>
    <scope>DOMAIN PH</scope>
</reference>
<comment type="function">
    <text evidence="2 3 14 15 17 18">Activates Rho-GTPases by promoting the exchange of GDP for GTP. May be involved in epithelial barrier permeability, cell motility and polarization, dendritic spine morphology, antigen presentation, leukemic cell differentiation, cell cycle regulation, innate immune response, and cancer. Binds Rac-GTPases, but does not seem to promote nucleotide exchange activity toward Rac-GTPases, which was uniquely reported in PubMed:9857026. May stimulate instead the cortical activity of Rac. Inactive toward CDC42, TC10, or Ras-GTPases. Forms an intracellular sensing system along with NOD1 for the detection of microbial effectors during cell invasion by pathogens. Required for RHOA and RIP2 dependent NF-kappaB signaling pathways activation upon S.flexneri cell invasion. Involved not only in sensing peptidoglycan (PGN)-derived muropeptides through NOD1 that is independent of its GEF activity, but also in the activation of NF-kappaB by Shigella effector proteins (IpgB2 and OspB) which requires its GEF activity and the activation of RhoA. Involved in innate immune signaling transduction pathway promoting cytokine IL6/interleukin-6 and TNF-alpha secretion in macrophage upon stimulation by bacterial peptidoglycans; acts as a signaling intermediate between NOD2 receptor and RIPK2 kinase. Contributes to the tyrosine phosphorylation of RIPK2 through Src tyrosine kinase leading to NF-kappaB activation by NOD2. Overexpression activates Rho-, but not Rac-GTPases, and increases paracellular permeability (By similarity). Involved in neuronal progenitor cell division and differentiation (PubMed:28453519). Involved in the migration of precerebellar neurons (By similarity).</text>
</comment>
<comment type="subunit">
    <text evidence="1 3">Found in a complex composed at least of ARHGEF2, NOD2 and RIPK2. Interacts with RIPK2; the interaction mediates tyrosine phosphorylation of RIPK2 by Src kinase CSK. Interacts with RIPK1 and RIPK3. Interacts with YWHAZ/14-3-3 zeta; when phosphorylated at Ser-886. Interacts with the kinases PAK4, AURKA and MAPK1. Interacts with RHOA and RAC1. Interacts with NOD1. Interacts (via the N-terminal zinc finger) with CAPN6 (via domain II). Interacts with DYNLT1 (By similarity).</text>
</comment>
<comment type="interaction">
    <interactant intactId="EBI-302405">
        <id>Q92974</id>
    </interactant>
    <interactant intactId="EBI-1644164">
        <id>O43524</id>
        <label>FOXO3</label>
    </interactant>
    <organismsDiffer>false</organismsDiffer>
    <experiments>2</experiments>
</comment>
<comment type="interaction">
    <interactant intactId="EBI-302405">
        <id>Q92974</id>
    </interactant>
    <interactant intactId="EBI-10271199">
        <id>Q8NI38</id>
        <label>NFKBID</label>
    </interactant>
    <organismsDiffer>false</organismsDiffer>
    <experiments>3</experiments>
</comment>
<comment type="interaction">
    <interactant intactId="EBI-302405">
        <id>Q92974</id>
    </interactant>
    <interactant intactId="EBI-446668">
        <id>P61586</id>
        <label>RHOA</label>
    </interactant>
    <organismsDiffer>false</organismsDiffer>
    <experiments>5</experiments>
</comment>
<comment type="interaction">
    <interactant intactId="EBI-302405">
        <id>Q92974</id>
    </interactant>
    <interactant intactId="EBI-10189722">
        <id>Q8N5L8</id>
        <label>RPP25L</label>
    </interactant>
    <organismsDiffer>false</organismsDiffer>
    <experiments>9</experiments>
</comment>
<comment type="interaction">
    <interactant intactId="EBI-302405">
        <id>Q92974</id>
    </interactant>
    <interactant intactId="EBI-476295">
        <id>P31947</id>
        <label>SFN</label>
    </interactant>
    <organismsDiffer>false</organismsDiffer>
    <experiments>4</experiments>
</comment>
<comment type="interaction">
    <interactant intactId="EBI-302405">
        <id>Q92974</id>
    </interactant>
    <interactant intactId="EBI-356498">
        <id>P62258</id>
        <label>YWHAE</label>
    </interactant>
    <organismsDiffer>false</organismsDiffer>
    <experiments>6</experiments>
</comment>
<comment type="interaction">
    <interactant intactId="EBI-302405">
        <id>Q92974</id>
    </interactant>
    <interactant intactId="EBI-347088">
        <id>P63104</id>
        <label>YWHAZ</label>
    </interactant>
    <organismsDiffer>false</organismsDiffer>
    <experiments>7</experiments>
</comment>
<comment type="subcellular location">
    <subcellularLocation>
        <location evidence="9 15 18">Cytoplasm</location>
        <location evidence="9 15 18">Cytoskeleton</location>
    </subcellularLocation>
    <subcellularLocation>
        <location evidence="11 15">Cytoplasm</location>
    </subcellularLocation>
    <subcellularLocation>
        <location evidence="14">Cell junction</location>
        <location evidence="14">Tight junction</location>
    </subcellularLocation>
    <subcellularLocation>
        <location evidence="11">Golgi apparatus</location>
    </subcellularLocation>
    <subcellularLocation>
        <location evidence="12">Cytoplasm</location>
        <location evidence="12">Cytoskeleton</location>
        <location evidence="12">Spindle</location>
    </subcellularLocation>
    <subcellularLocation>
        <location evidence="14">Cell projection</location>
        <location evidence="14">Ruffle membrane</location>
    </subcellularLocation>
    <subcellularLocation>
        <location evidence="15">Cytoplasmic vesicle</location>
    </subcellularLocation>
    <text evidence="11 14 15">Localizes to the tips of cortical microtubules of the mitotic spindle during cell division, and is further released upon microtubule depolymerization (PubMed:15827085). Recruited into membrane ruffles induced by S.flexneri at tight junctions of polarized epithelial cells (PubMed:19043560). Colocalized with NOD2 and RIPK2 in vesicles and with the cytoskeleton (PubMed:21887730).</text>
</comment>
<comment type="alternative products">
    <event type="alternative splicing"/>
    <isoform>
        <id>Q92974-1</id>
        <name>1</name>
        <sequence type="displayed"/>
    </isoform>
    <isoform>
        <id>Q92974-2</id>
        <name>2</name>
        <sequence type="described" ref="VSP_039458"/>
    </isoform>
    <isoform>
        <id>Q92974-3</id>
        <name>3</name>
        <sequence type="described" ref="VSP_039457 VSP_039458"/>
    </isoform>
</comment>
<comment type="induction">
    <text evidence="15">Up-regulated by bacterial peptidoglycans stimulation, such as muramyl dipeptide and in biopsies from inflamed mucosal areas of Crohn's disease patients.</text>
</comment>
<comment type="domain">
    <text>The DH (DBL-homology) domain interacts with and promotes loading of GTP on RhoA. Promotes tyrosine phosphorylation of RIPK2.</text>
</comment>
<comment type="domain">
    <text evidence="16">The PH domain has no affinity for phosphoinositides suggesting that it does not interact directly with membranes.</text>
</comment>
<comment type="domain">
    <text evidence="9 18">The phorbol-ester/DAG-type zinc-finger and the C-terminal coiled-coil domains (606-986) are both important for association with microtubules.</text>
</comment>
<comment type="PTM">
    <text evidence="10 11 12 13">Phosphorylation of Ser-886 by PAK1 induces binding to protein YWHAZ, promoting its relocation to microtubules and the inhibition of its activity. Phosphorylated by AURKA and CDK1 during mitosis, which negatively regulates its activity. Phosphorylation by MAPK1 or MAPK3 increases nucleotide exchange activity. Phosphorylation by PAK4 releases GEF-H1 from the microtubules. Phosphorylated on serine, threonine and tyrosine residues in a RIPK2-dependent manner.</text>
</comment>
<comment type="disease" evidence="17">
    <disease id="DI-05017">
        <name>Neurodevelopmental disorder with midbrain and hindbrain malformations</name>
        <acronym>NEDMHM</acronym>
        <description>An autosomal recessive neurodevelopmental disorder characterized by intellectual disability, speech delay, mild microcephaly, midbrain-hindbrain malformations, and variable dysmorphic features.</description>
        <dbReference type="MIM" id="617523"/>
    </disease>
    <text>The disease is caused by variants affecting the gene represented in this entry.</text>
</comment>
<comment type="sequence caution" evidence="22">
    <conflict type="miscellaneous discrepancy">
        <sequence resource="EMBL-CDS" id="AAC97383"/>
    </conflict>
    <text>Sequence differs at a large extent from the sequence shown in the paper.</text>
</comment>
<comment type="sequence caution" evidence="22">
    <conflict type="erroneous initiation">
        <sequence resource="EMBL-CDS" id="AAH20567"/>
    </conflict>
    <text>Truncated N-terminus.</text>
</comment>
<comment type="sequence caution" evidence="22">
    <conflict type="erroneous initiation">
        <sequence resource="EMBL-CDS" id="BAA31626"/>
    </conflict>
    <text>Extended N-terminus.</text>
</comment>
<comment type="sequence caution" evidence="22">
    <conflict type="frameshift">
        <sequence resource="EMBL-CDS" id="CAA33634"/>
    </conflict>
</comment>
<comment type="online information" name="Atlas of Genetics and Cytogenetics in Oncology and Haematology">
    <link uri="https://atlasgeneticsoncology.org/gene/43150/ARHGEF2"/>
</comment>
<comment type="online information" name="Wikipedia">
    <link uri="https://en.wikipedia.org/wiki/ARHGEF2"/>
    <text>ARHGEF2 entry</text>
</comment>
<protein>
    <recommendedName>
        <fullName>Rho guanine nucleotide exchange factor 2</fullName>
    </recommendedName>
    <alternativeName>
        <fullName>Guanine nucleotide exchange factor H1</fullName>
        <shortName>GEF-H1</shortName>
    </alternativeName>
    <alternativeName>
        <fullName>Microtubule-regulated Rho-GEF</fullName>
    </alternativeName>
    <alternativeName>
        <fullName>Proliferating cell nucleolar antigen p40</fullName>
    </alternativeName>
</protein>
<evidence type="ECO:0000250" key="1"/>
<evidence type="ECO:0000250" key="2">
    <source>
        <dbReference type="UniProtKB" id="Q60875"/>
    </source>
</evidence>
<evidence type="ECO:0000250" key="3">
    <source>
        <dbReference type="UniProtKB" id="Q865S3"/>
    </source>
</evidence>
<evidence type="ECO:0000255" key="4"/>
<evidence type="ECO:0000255" key="5">
    <source>
        <dbReference type="PROSITE-ProRule" id="PRU00062"/>
    </source>
</evidence>
<evidence type="ECO:0000255" key="6">
    <source>
        <dbReference type="PROSITE-ProRule" id="PRU00145"/>
    </source>
</evidence>
<evidence type="ECO:0000255" key="7">
    <source>
        <dbReference type="PROSITE-ProRule" id="PRU00226"/>
    </source>
</evidence>
<evidence type="ECO:0000256" key="8">
    <source>
        <dbReference type="SAM" id="MobiDB-lite"/>
    </source>
</evidence>
<evidence type="ECO:0000269" key="9">
    <source>
    </source>
</evidence>
<evidence type="ECO:0000269" key="10">
    <source>
    </source>
</evidence>
<evidence type="ECO:0000269" key="11">
    <source>
    </source>
</evidence>
<evidence type="ECO:0000269" key="12">
    <source>
    </source>
</evidence>
<evidence type="ECO:0000269" key="13">
    <source>
    </source>
</evidence>
<evidence type="ECO:0000269" key="14">
    <source>
    </source>
</evidence>
<evidence type="ECO:0000269" key="15">
    <source>
    </source>
</evidence>
<evidence type="ECO:0000269" key="16">
    <source>
    </source>
</evidence>
<evidence type="ECO:0000269" key="17">
    <source>
    </source>
</evidence>
<evidence type="ECO:0000269" key="18">
    <source>
    </source>
</evidence>
<evidence type="ECO:0000303" key="19">
    <source>
    </source>
</evidence>
<evidence type="ECO:0000303" key="20">
    <source>
    </source>
</evidence>
<evidence type="ECO:0000303" key="21">
    <source>
    </source>
</evidence>
<evidence type="ECO:0000305" key="22"/>
<evidence type="ECO:0007744" key="23">
    <source>
    </source>
</evidence>
<evidence type="ECO:0007744" key="24">
    <source>
    </source>
</evidence>
<evidence type="ECO:0007744" key="25">
    <source>
    </source>
</evidence>
<evidence type="ECO:0007744" key="26">
    <source>
    </source>
</evidence>
<evidence type="ECO:0007744" key="27">
    <source>
    </source>
</evidence>
<evidence type="ECO:0007744" key="28">
    <source>
    </source>
</evidence>
<evidence type="ECO:0007744" key="29">
    <source>
    </source>
</evidence>
<evidence type="ECO:0007744" key="30">
    <source>
    </source>
</evidence>
<evidence type="ECO:0007744" key="31">
    <source>
    </source>
</evidence>
<evidence type="ECO:0007829" key="32">
    <source>
        <dbReference type="PDB" id="5EFX"/>
    </source>
</evidence>
<evidence type="ECO:0007829" key="33">
    <source>
        <dbReference type="PDB" id="7G83"/>
    </source>
</evidence>
<organism>
    <name type="scientific">Homo sapiens</name>
    <name type="common">Human</name>
    <dbReference type="NCBI Taxonomy" id="9606"/>
    <lineage>
        <taxon>Eukaryota</taxon>
        <taxon>Metazoa</taxon>
        <taxon>Chordata</taxon>
        <taxon>Craniata</taxon>
        <taxon>Vertebrata</taxon>
        <taxon>Euteleostomi</taxon>
        <taxon>Mammalia</taxon>
        <taxon>Eutheria</taxon>
        <taxon>Euarchontoglires</taxon>
        <taxon>Primates</taxon>
        <taxon>Haplorrhini</taxon>
        <taxon>Catarrhini</taxon>
        <taxon>Hominidae</taxon>
        <taxon>Homo</taxon>
    </lineage>
</organism>
<name>ARHG2_HUMAN</name>
<keyword id="KW-0002">3D-structure</keyword>
<keyword id="KW-0007">Acetylation</keyword>
<keyword id="KW-0025">Alternative splicing</keyword>
<keyword id="KW-0131">Cell cycle</keyword>
<keyword id="KW-0132">Cell division</keyword>
<keyword id="KW-0965">Cell junction</keyword>
<keyword id="KW-1003">Cell membrane</keyword>
<keyword id="KW-0966">Cell projection</keyword>
<keyword id="KW-0175">Coiled coil</keyword>
<keyword id="KW-0963">Cytoplasm</keyword>
<keyword id="KW-0968">Cytoplasmic vesicle</keyword>
<keyword id="KW-0206">Cytoskeleton</keyword>
<keyword id="KW-0217">Developmental protein</keyword>
<keyword id="KW-0221">Differentiation</keyword>
<keyword id="KW-0333">Golgi apparatus</keyword>
<keyword id="KW-0344">Guanine-nucleotide releasing factor</keyword>
<keyword id="KW-0391">Immunity</keyword>
<keyword id="KW-0399">Innate immunity</keyword>
<keyword id="KW-0991">Intellectual disability</keyword>
<keyword id="KW-0472">Membrane</keyword>
<keyword id="KW-0479">Metal-binding</keyword>
<keyword id="KW-0493">Microtubule</keyword>
<keyword id="KW-0498">Mitosis</keyword>
<keyword id="KW-0524">Neurogenesis</keyword>
<keyword id="KW-0597">Phosphoprotein</keyword>
<keyword id="KW-1267">Proteomics identification</keyword>
<keyword id="KW-1185">Reference proteome</keyword>
<keyword id="KW-0796">Tight junction</keyword>
<keyword id="KW-0862">Zinc</keyword>
<keyword id="KW-0863">Zinc-finger</keyword>